<feature type="initiator methionine" description="Removed" evidence="40 74">
    <location>
        <position position="1"/>
    </location>
</feature>
<feature type="chain" id="PRO_0000213707" description="Protein-glutamine gamma-glutamyltransferase 2">
    <location>
        <begin position="2"/>
        <end position="687"/>
    </location>
</feature>
<feature type="active site" evidence="6 65 66">
    <location>
        <position position="277"/>
    </location>
</feature>
<feature type="active site" evidence="6">
    <location>
        <position position="335"/>
    </location>
</feature>
<feature type="active site" evidence="6">
    <location>
        <position position="358"/>
    </location>
</feature>
<feature type="binding site" evidence="1">
    <location>
        <position position="398"/>
    </location>
    <ligand>
        <name>Ca(2+)</name>
        <dbReference type="ChEBI" id="CHEBI:29108"/>
    </ligand>
</feature>
<feature type="binding site" evidence="1">
    <location>
        <position position="400"/>
    </location>
    <ligand>
        <name>Ca(2+)</name>
        <dbReference type="ChEBI" id="CHEBI:29108"/>
    </ligand>
</feature>
<feature type="binding site" evidence="64">
    <location>
        <position position="437"/>
    </location>
    <ligand>
        <name>Ca(2+)</name>
        <dbReference type="ChEBI" id="CHEBI:29108"/>
    </ligand>
</feature>
<feature type="binding site" evidence="1">
    <location>
        <position position="447"/>
    </location>
    <ligand>
        <name>Ca(2+)</name>
        <dbReference type="ChEBI" id="CHEBI:29108"/>
    </ligand>
</feature>
<feature type="binding site" evidence="1">
    <location>
        <position position="452"/>
    </location>
    <ligand>
        <name>Ca(2+)</name>
        <dbReference type="ChEBI" id="CHEBI:29108"/>
    </ligand>
</feature>
<feature type="binding site" evidence="20 27 30 61 63 68 70 71 72 73">
    <location>
        <begin position="476"/>
        <end position="483"/>
    </location>
    <ligand>
        <name>GTP</name>
        <dbReference type="ChEBI" id="CHEBI:37565"/>
    </ligand>
</feature>
<feature type="binding site" evidence="64">
    <location>
        <position position="539"/>
    </location>
    <ligand>
        <name>Ca(2+)</name>
        <dbReference type="ChEBI" id="CHEBI:29108"/>
    </ligand>
</feature>
<feature type="binding site" evidence="20 27 30 61 63 68 70 71 72 73">
    <location>
        <begin position="580"/>
        <end position="583"/>
    </location>
    <ligand>
        <name>GTP</name>
        <dbReference type="ChEBI" id="CHEBI:37565"/>
    </ligand>
</feature>
<feature type="site" description="Important for catalytic activity" evidence="4">
    <location>
        <position position="516"/>
    </location>
</feature>
<feature type="modified residue" description="N-acetylalanine" evidence="40 74">
    <location>
        <position position="2"/>
    </location>
</feature>
<feature type="modified residue" description="Phosphoserine" evidence="75">
    <location>
        <position position="60"/>
    </location>
</feature>
<feature type="modified residue" description="N6-acetyllysine" evidence="3">
    <location>
        <position position="468"/>
    </location>
</feature>
<feature type="disulfide bond" description="Alternate" evidence="15 16 20">
    <location>
        <begin position="230"/>
        <end position="370"/>
    </location>
</feature>
<feature type="disulfide bond" description="Alternate" evidence="16">
    <location>
        <begin position="370"/>
        <end position="371"/>
    </location>
</feature>
<feature type="cross-link" description="Isoglutamyl lysine isopeptide (Gln-Lys) (interchain with K-?)" evidence="2">
    <location>
        <position position="633"/>
    </location>
</feature>
<feature type="splice variant" id="VSP_006413" description="In isoform 3." evidence="57">
    <original>VLRCLGIPTRVVTNYNSAHDQNSNLLIEYFRNEFGEIQGDKSEMIWNFHCWVESWMTRPDLQP</original>
    <variation>GELHAGMWVMSPGRGHEEHWSRNQDIPALVLPPATNTLNALCGLEPVTTLSGPLSNSHPSSGC</variation>
    <location>
        <begin position="287"/>
        <end position="349"/>
    </location>
</feature>
<feature type="splice variant" id="VSP_006414" description="In isoform 3." evidence="57">
    <location>
        <begin position="350"/>
        <end position="687"/>
    </location>
</feature>
<feature type="splice variant" id="VSP_006411" description="In isoform 2." evidence="44 45">
    <original>EKSVPLCILY</original>
    <variation>GKALCSWSIC</variation>
    <location>
        <begin position="539"/>
        <end position="548"/>
    </location>
</feature>
<feature type="splice variant" id="VSP_006412" description="In isoform 2." evidence="44 45">
    <location>
        <begin position="549"/>
        <end position="687"/>
    </location>
</feature>
<feature type="sequence variant" id="VAR_052553" description="In dbSNP:rs41274720." evidence="41">
    <original>R</original>
    <variation>H</variation>
    <location>
        <position position="76"/>
    </location>
</feature>
<feature type="sequence variant" id="VAR_055357" description="In dbSNP:rs45530133." evidence="41">
    <original>R</original>
    <variation>H</variation>
    <location>
        <position position="214"/>
    </location>
</feature>
<feature type="sequence variant" id="VAR_055358" description="In dbSNP:rs45567334." evidence="41">
    <original>Q</original>
    <variation>R</variation>
    <location>
        <position position="324"/>
    </location>
</feature>
<feature type="sequence variant" id="VAR_037998" description="In patients with early-onset diabetes type 2; uncertain significance; dbSNP:rs141603506." evidence="13">
    <original>M</original>
    <variation>R</variation>
    <location>
        <position position="330"/>
    </location>
</feature>
<feature type="sequence variant" id="VAR_037999" description="In patients with early-onset diabetes type 2; uncertain significance." evidence="13">
    <original>I</original>
    <variation>N</variation>
    <location>
        <position position="331"/>
    </location>
</feature>
<feature type="sequence variant" id="VAR_055359" description="In dbSNP:rs45629036." evidence="41">
    <original>R</original>
    <variation>W</variation>
    <location>
        <position position="436"/>
    </location>
</feature>
<feature type="sequence variant" id="VAR_052554" description="In dbSNP:rs45556333." evidence="41">
    <original>P</original>
    <variation>S</variation>
    <location>
        <position position="536"/>
    </location>
</feature>
<feature type="sequence variant" id="VAR_036554" description="In a colorectal cancer sample; somatic mutation." evidence="11">
    <original>G</original>
    <variation>V</variation>
    <location>
        <position position="660"/>
    </location>
</feature>
<feature type="mutagenesis site" description="Abolishes GTP-binding and transglutaminase activities. Does not have cytotoxic activity when overexpressed." evidence="12">
    <original>S</original>
    <variation>E</variation>
    <location>
        <position position="171"/>
    </location>
</feature>
<feature type="mutagenesis site" description="Abolished isopeptidase activity and reduced transamidase activity." evidence="21">
    <original>W</original>
    <variation>F</variation>
    <location>
        <position position="180"/>
    </location>
</feature>
<feature type="mutagenesis site" description="Abolished isopeptidase and transamidase activities." evidence="21">
    <original>W</original>
    <variation>L</variation>
    <location>
        <position position="180"/>
    </location>
</feature>
<feature type="mutagenesis site" description="Displays lower Ca(2+)-binding affinity and reduced transglutaminase activity." evidence="18">
    <original>V</original>
    <variation>G</variation>
    <location>
        <position position="224"/>
    </location>
</feature>
<feature type="mutagenesis site" description="Does not affect the protein-glutamine deamidase activity." evidence="16">
    <original>C</original>
    <variation>A</variation>
    <location>
        <position position="230"/>
    </location>
</feature>
<feature type="mutagenesis site" description="Abolished isopeptidase and transamidase activities." evidence="21">
    <original>W</original>
    <variation>F</variation>
    <variation>L</variation>
    <location>
        <position position="241"/>
    </location>
</feature>
<feature type="mutagenesis site" description="Abolished protein-glutamine gamma-glutamyltransferase activity without affecting alpha-1 adrenergic receptor signaling. Abolished isopeptidase activity." evidence="19 21 33 35">
    <original>C</original>
    <variation>S</variation>
    <location>
        <position position="277"/>
    </location>
</feature>
<feature type="mutagenesis site" description="Dominant negative mutant. Abolishes WDR54 cross-linking." evidence="28">
    <original>C</original>
    <variation>V</variation>
    <location>
        <position position="277"/>
    </location>
</feature>
<feature type="mutagenesis site" description="In TG2-T; strongly reduced isopeptidase activity without affecting the transamidase activity." evidence="21">
    <original>W</original>
    <variation>F</variation>
    <location>
        <position position="278"/>
    </location>
</feature>
<feature type="mutagenesis site" description="Abolished isopeptidase and transamidase activities." evidence="21">
    <original>W</original>
    <variation>L</variation>
    <location>
        <position position="278"/>
    </location>
</feature>
<feature type="mutagenesis site" description="In TG2-I; strongly reduced transamidase activity without affecting the isopeptidase activity." evidence="21">
    <original>W</original>
    <variation>F</variation>
    <location>
        <position position="332"/>
    </location>
</feature>
<feature type="mutagenesis site" description="Abolished isopeptidase and transamidase activities." evidence="21">
    <original>W</original>
    <variation>L</variation>
    <location>
        <position position="332"/>
    </location>
</feature>
<feature type="mutagenesis site" description="Abolished isopeptidase and transamidase activities." evidence="21">
    <original>F</original>
    <variation>L</variation>
    <location>
        <position position="334"/>
    </location>
</feature>
<feature type="mutagenesis site" description="Reduced isopeptidase and transamidase activities." evidence="21">
    <original>W</original>
    <variation>F</variation>
    <location>
        <position position="337"/>
    </location>
</feature>
<feature type="mutagenesis site" description="Abolished isopeptidase and transamidase activities." evidence="21">
    <original>W</original>
    <variation>L</variation>
    <location>
        <position position="337"/>
    </location>
</feature>
<feature type="mutagenesis site" description="Impaired substrate recognition for the protein-glutamine deamidase activity." evidence="16">
    <original>C</original>
    <variation>A</variation>
    <location>
        <position position="370"/>
    </location>
</feature>
<feature type="mutagenesis site" description="Impaired substrate recognition for the protein-glutamine deamidase activity." evidence="16">
    <original>C</original>
    <variation>A</variation>
    <location>
        <position position="371"/>
    </location>
</feature>
<feature type="mutagenesis site" description="Impaired Ca(2+)-binding leading to reduced transglutaminase activity." evidence="30">
    <original>E</original>
    <variation>R</variation>
    <location>
        <position position="437"/>
    </location>
</feature>
<feature type="mutagenesis site" description="No effect on isopeptidase and transamidase activities." evidence="21">
    <original>Y</original>
    <variation>L</variation>
    <location>
        <position position="516"/>
    </location>
</feature>
<feature type="mutagenesis site" description="Impaired Ca(2+)-binding leading to reduced transglutaminase activity." evidence="30">
    <original>E</original>
    <variation>R</variation>
    <location>
        <position position="539"/>
    </location>
</feature>
<feature type="mutagenesis site" description="Substitution with F13A1 sequence. Abolished interaction with phospholipase C and ability to promote alpha-1 adrenergic receptor signaling." evidence="32">
    <original>VVNFESDK</original>
    <variation>IASMSSDS</variation>
    <location>
        <begin position="665"/>
        <end position="672"/>
    </location>
</feature>
<feature type="sequence conflict" description="In Ref. 1; AAA63261." evidence="60" ref="1">
    <original>E</original>
    <variation>Q</variation>
    <location>
        <position position="51"/>
    </location>
</feature>
<feature type="sequence conflict" description="In Ref. 1; AAA63261." evidence="60" ref="1">
    <original>E</original>
    <variation>Q</variation>
    <location>
        <position position="186"/>
    </location>
</feature>
<feature type="sequence conflict" description="In Ref. 1; AAA63261." evidence="60" ref="1">
    <original>V</original>
    <variation>G</variation>
    <location>
        <position position="224"/>
    </location>
</feature>
<feature type="sequence conflict" description="In Ref. 1; AAA63261." evidence="60" ref="1">
    <original>N</original>
    <variation>T</variation>
    <location>
        <position position="533"/>
    </location>
</feature>
<feature type="sequence conflict" description="In Ref. 1; AAA63261." evidence="60" ref="1">
    <original>L</original>
    <variation>V</variation>
    <location>
        <position position="655"/>
    </location>
</feature>
<feature type="strand" evidence="77">
    <location>
        <begin position="7"/>
        <end position="11"/>
    </location>
</feature>
<feature type="helix" evidence="77">
    <location>
        <begin position="14"/>
        <end position="20"/>
    </location>
</feature>
<feature type="helix" evidence="77">
    <location>
        <begin position="24"/>
        <end position="26"/>
    </location>
</feature>
<feature type="strand" evidence="77">
    <location>
        <begin position="28"/>
        <end position="30"/>
    </location>
</feature>
<feature type="strand" evidence="77">
    <location>
        <begin position="32"/>
        <end position="34"/>
    </location>
</feature>
<feature type="strand" evidence="77">
    <location>
        <begin position="39"/>
        <end position="48"/>
    </location>
</feature>
<feature type="turn" evidence="77">
    <location>
        <begin position="52"/>
        <end position="54"/>
    </location>
</feature>
<feature type="strand" evidence="77">
    <location>
        <begin position="55"/>
        <end position="66"/>
    </location>
</feature>
<feature type="turn" evidence="77">
    <location>
        <begin position="69"/>
        <end position="72"/>
    </location>
</feature>
<feature type="strand" evidence="77">
    <location>
        <begin position="73"/>
        <end position="79"/>
    </location>
</feature>
<feature type="strand" evidence="79">
    <location>
        <begin position="85"/>
        <end position="87"/>
    </location>
</feature>
<feature type="strand" evidence="77">
    <location>
        <begin position="89"/>
        <end position="95"/>
    </location>
</feature>
<feature type="strand" evidence="77">
    <location>
        <begin position="97"/>
        <end position="105"/>
    </location>
</feature>
<feature type="strand" evidence="77">
    <location>
        <begin position="113"/>
        <end position="123"/>
    </location>
</feature>
<feature type="strand" evidence="77">
    <location>
        <begin position="126"/>
        <end position="138"/>
    </location>
</feature>
<feature type="helix" evidence="77">
    <location>
        <begin position="153"/>
        <end position="159"/>
    </location>
</feature>
<feature type="strand" evidence="77">
    <location>
        <begin position="164"/>
        <end position="170"/>
    </location>
</feature>
<feature type="strand" evidence="77">
    <location>
        <begin position="172"/>
        <end position="181"/>
    </location>
</feature>
<feature type="helix" evidence="77">
    <location>
        <begin position="189"/>
        <end position="198"/>
    </location>
</feature>
<feature type="helix" evidence="77">
    <location>
        <begin position="201"/>
        <end position="205"/>
    </location>
</feature>
<feature type="helix" evidence="77">
    <location>
        <begin position="207"/>
        <end position="213"/>
    </location>
</feature>
<feature type="helix" evidence="77">
    <location>
        <begin position="217"/>
        <end position="226"/>
    </location>
</feature>
<feature type="turn" evidence="77">
    <location>
        <begin position="227"/>
        <end position="229"/>
    </location>
</feature>
<feature type="turn" evidence="77">
    <location>
        <begin position="231"/>
        <end position="234"/>
    </location>
</feature>
<feature type="strand" evidence="77">
    <location>
        <begin position="235"/>
        <end position="239"/>
    </location>
</feature>
<feature type="helix" evidence="81">
    <location>
        <begin position="245"/>
        <end position="247"/>
    </location>
</feature>
<feature type="turn" evidence="77">
    <location>
        <begin position="251"/>
        <end position="253"/>
    </location>
</feature>
<feature type="strand" evidence="79">
    <location>
        <begin position="255"/>
        <end position="257"/>
    </location>
</feature>
<feature type="helix" evidence="77">
    <location>
        <begin position="258"/>
        <end position="266"/>
    </location>
</feature>
<feature type="turn" evidence="77">
    <location>
        <begin position="267"/>
        <end position="269"/>
    </location>
</feature>
<feature type="strand" evidence="77">
    <location>
        <begin position="272"/>
        <end position="275"/>
    </location>
</feature>
<feature type="helix" evidence="77">
    <location>
        <begin position="277"/>
        <end position="291"/>
    </location>
</feature>
<feature type="strand" evidence="77">
    <location>
        <begin position="295"/>
        <end position="304"/>
    </location>
</feature>
<feature type="strand" evidence="76">
    <location>
        <begin position="306"/>
        <end position="309"/>
    </location>
</feature>
<feature type="helix" evidence="77">
    <location>
        <begin position="311"/>
        <end position="317"/>
    </location>
</feature>
<feature type="strand" evidence="77">
    <location>
        <begin position="332"/>
        <end position="342"/>
    </location>
</feature>
<feature type="strand" evidence="78">
    <location>
        <begin position="347"/>
        <end position="350"/>
    </location>
</feature>
<feature type="strand" evidence="77">
    <location>
        <begin position="353"/>
        <end position="357"/>
    </location>
</feature>
<feature type="strand" evidence="77">
    <location>
        <begin position="365"/>
        <end position="369"/>
    </location>
</feature>
<feature type="helix" evidence="77">
    <location>
        <begin position="376"/>
        <end position="380"/>
    </location>
</feature>
<feature type="turn" evidence="77">
    <location>
        <begin position="387"/>
        <end position="389"/>
    </location>
</feature>
<feature type="helix" evidence="77">
    <location>
        <begin position="390"/>
        <end position="397"/>
    </location>
</feature>
<feature type="strand" evidence="77">
    <location>
        <begin position="400"/>
        <end position="404"/>
    </location>
</feature>
<feature type="strand" evidence="80">
    <location>
        <begin position="412"/>
        <end position="414"/>
    </location>
</feature>
<feature type="strand" evidence="77">
    <location>
        <begin position="419"/>
        <end position="429"/>
    </location>
</feature>
<feature type="strand" evidence="77">
    <location>
        <begin position="433"/>
        <end position="438"/>
    </location>
</feature>
<feature type="helix" evidence="77">
    <location>
        <begin position="440"/>
        <end position="443"/>
    </location>
</feature>
<feature type="strand" evidence="78">
    <location>
        <begin position="447"/>
        <end position="449"/>
    </location>
</feature>
<feature type="helix" evidence="77">
    <location>
        <begin position="450"/>
        <end position="460"/>
    </location>
</feature>
<feature type="turn" evidence="81">
    <location>
        <begin position="462"/>
        <end position="465"/>
    </location>
</feature>
<feature type="turn" evidence="78">
    <location>
        <begin position="468"/>
        <end position="471"/>
    </location>
</feature>
<feature type="strand" evidence="77">
    <location>
        <begin position="473"/>
        <end position="478"/>
    </location>
</feature>
<feature type="strand" evidence="77">
    <location>
        <begin position="489"/>
        <end position="497"/>
    </location>
</feature>
<feature type="strand" evidence="77">
    <location>
        <begin position="499"/>
        <end position="501"/>
    </location>
</feature>
<feature type="strand" evidence="77">
    <location>
        <begin position="503"/>
        <end position="514"/>
    </location>
</feature>
<feature type="strand" evidence="77">
    <location>
        <begin position="520"/>
        <end position="534"/>
    </location>
</feature>
<feature type="strand" evidence="77">
    <location>
        <begin position="538"/>
        <end position="546"/>
    </location>
</feature>
<feature type="helix" evidence="77">
    <location>
        <begin position="548"/>
        <end position="551"/>
    </location>
</feature>
<feature type="turn" evidence="77">
    <location>
        <begin position="552"/>
        <end position="554"/>
    </location>
</feature>
<feature type="strand" evidence="77">
    <location>
        <begin position="560"/>
        <end position="569"/>
    </location>
</feature>
<feature type="turn" evidence="77">
    <location>
        <begin position="570"/>
        <end position="573"/>
    </location>
</feature>
<feature type="strand" evidence="77">
    <location>
        <begin position="574"/>
        <end position="583"/>
    </location>
</feature>
<feature type="strand" evidence="77">
    <location>
        <begin position="590"/>
        <end position="595"/>
    </location>
</feature>
<feature type="strand" evidence="77">
    <location>
        <begin position="598"/>
        <end position="601"/>
    </location>
</feature>
<feature type="strand" evidence="77">
    <location>
        <begin position="603"/>
        <end position="610"/>
    </location>
</feature>
<feature type="strand" evidence="77">
    <location>
        <begin position="613"/>
        <end position="615"/>
    </location>
</feature>
<feature type="strand" evidence="77">
    <location>
        <begin position="619"/>
        <end position="625"/>
    </location>
</feature>
<feature type="turn" evidence="77">
    <location>
        <begin position="627"/>
        <end position="629"/>
    </location>
</feature>
<feature type="strand" evidence="77">
    <location>
        <begin position="634"/>
        <end position="638"/>
    </location>
</feature>
<feature type="strand" evidence="77">
    <location>
        <begin position="647"/>
        <end position="654"/>
    </location>
</feature>
<feature type="strand" evidence="77">
    <location>
        <begin position="658"/>
        <end position="660"/>
    </location>
</feature>
<feature type="strand" evidence="77">
    <location>
        <begin position="662"/>
        <end position="669"/>
    </location>
</feature>
<feature type="strand" evidence="77">
    <location>
        <begin position="671"/>
        <end position="673"/>
    </location>
</feature>
<feature type="strand" evidence="77">
    <location>
        <begin position="676"/>
        <end position="682"/>
    </location>
</feature>
<feature type="mutagenesis site" description="Abolished protein-glutamine gamma-glutamyltransferase activity without affecting cytotoxic activity." evidence="12">
    <original>C</original>
    <variation>V</variation>
    <location sequence="P21980-2">
        <position position="277"/>
    </location>
</feature>
<protein>
    <recommendedName>
        <fullName evidence="60">Protein-glutamine gamma-glutamyltransferase 2</fullName>
        <ecNumber evidence="18 19 30">2.3.2.13</ecNumber>
    </recommendedName>
    <alternativeName>
        <fullName evidence="52">Erythrocyte transglutaminase</fullName>
    </alternativeName>
    <alternativeName>
        <fullName evidence="54">Heart G alpha(h)</fullName>
        <shortName evidence="54">hhG alpha(h)</shortName>
    </alternativeName>
    <alternativeName>
        <fullName evidence="60">Isopeptidase TGM2</fullName>
        <ecNumber evidence="21 22">3.4.-.-</ecNumber>
    </alternativeName>
    <alternativeName>
        <fullName evidence="58">Protein G alpha(h)</fullName>
        <shortName evidence="58">G(h)</shortName>
    </alternativeName>
    <alternativeName>
        <fullName evidence="60">Protein-glutamine deamidase TGM2</fullName>
        <ecNumber evidence="16 39">3.5.1.44</ecNumber>
    </alternativeName>
    <alternativeName>
        <fullName evidence="60">Protein-glutamine dopaminyltransferase TGM2</fullName>
        <ecNumber evidence="31">2.3.1.-</ecNumber>
    </alternativeName>
    <alternativeName>
        <fullName evidence="60">Protein-glutamine histaminyltransferase TGM2</fullName>
        <ecNumber evidence="17">2.3.1.-</ecNumber>
    </alternativeName>
    <alternativeName>
        <fullName evidence="60">Protein-glutamine noradrenalinyltransferase TGM2</fullName>
        <ecNumber evidence="2">2.3.1.-</ecNumber>
    </alternativeName>
    <alternativeName>
        <fullName evidence="60">Protein-glutamine serotonyltransferase TGM2</fullName>
        <ecNumber evidence="29">2.3.1.-</ecNumber>
    </alternativeName>
    <alternativeName>
        <fullName evidence="44 46 56 59">Tissue transglutaminase</fullName>
        <shortName evidence="56 59">tTG</shortName>
        <shortName evidence="43 55">tTgase</shortName>
    </alternativeName>
    <alternativeName>
        <fullName evidence="42">Transglutaminase C</fullName>
        <shortName evidence="42">TG(C)</shortName>
        <shortName evidence="42">TGC</shortName>
        <shortName evidence="42">TGase C</shortName>
    </alternativeName>
    <alternativeName>
        <fullName evidence="44">Transglutaminase H</fullName>
        <shortName evidence="44">TGase H</shortName>
    </alternativeName>
    <alternativeName>
        <fullName evidence="54">Transglutaminase II</fullName>
        <shortName evidence="54">TGase II</shortName>
    </alternativeName>
    <alternativeName>
        <fullName evidence="49 53">Transglutaminase-2</fullName>
        <shortName evidence="49 53">TG2</shortName>
        <shortName>TGase-2</shortName>
        <shortName evidence="51">hTG2</shortName>
    </alternativeName>
</protein>
<accession>P21980</accession>
<accession>E1P5V9</accession>
<accession>Q16436</accession>
<accession>Q6B838</accession>
<accession>Q9BTN7</accession>
<accession>Q9H035</accession>
<accession>Q9UH35</accession>
<dbReference type="EC" id="2.3.2.13" evidence="18 19 30"/>
<dbReference type="EC" id="3.4.-.-" evidence="21 22"/>
<dbReference type="EC" id="3.5.1.44" evidence="16 39"/>
<dbReference type="EC" id="2.3.1.-" evidence="31 17 2 29"/>
<dbReference type="EMBL" id="M55153">
    <property type="protein sequence ID" value="AAA63261.1"/>
    <property type="molecule type" value="mRNA"/>
</dbReference>
<dbReference type="EMBL" id="M98478">
    <property type="protein sequence ID" value="AAA36739.1"/>
    <property type="molecule type" value="mRNA"/>
</dbReference>
<dbReference type="EMBL" id="S81734">
    <property type="protein sequence ID" value="AAB36379.1"/>
    <property type="molecule type" value="mRNA"/>
</dbReference>
<dbReference type="EMBL" id="AY675221">
    <property type="protein sequence ID" value="AAT79353.1"/>
    <property type="molecule type" value="mRNA"/>
</dbReference>
<dbReference type="EMBL" id="AK291714">
    <property type="protein sequence ID" value="BAF84403.1"/>
    <property type="molecule type" value="mRNA"/>
</dbReference>
<dbReference type="EMBL" id="AK314618">
    <property type="protein sequence ID" value="BAG37184.1"/>
    <property type="molecule type" value="mRNA"/>
</dbReference>
<dbReference type="EMBL" id="DQ523828">
    <property type="protein sequence ID" value="ABF47109.1"/>
    <property type="molecule type" value="Genomic_DNA"/>
</dbReference>
<dbReference type="EMBL" id="AL031651">
    <property type="status" value="NOT_ANNOTATED_CDS"/>
    <property type="molecule type" value="Genomic_DNA"/>
</dbReference>
<dbReference type="EMBL" id="CH471077">
    <property type="protein sequence ID" value="EAW76040.1"/>
    <property type="molecule type" value="Genomic_DNA"/>
</dbReference>
<dbReference type="EMBL" id="CH471077">
    <property type="protein sequence ID" value="EAW76042.1"/>
    <property type="molecule type" value="Genomic_DNA"/>
</dbReference>
<dbReference type="EMBL" id="CH471077">
    <property type="protein sequence ID" value="EAW76044.1"/>
    <property type="molecule type" value="Genomic_DNA"/>
</dbReference>
<dbReference type="EMBL" id="BC003551">
    <property type="protein sequence ID" value="AAH03551.1"/>
    <property type="molecule type" value="mRNA"/>
</dbReference>
<dbReference type="EMBL" id="AL512703">
    <property type="protein sequence ID" value="CAC21649.1"/>
    <property type="molecule type" value="mRNA"/>
</dbReference>
<dbReference type="CCDS" id="CCDS13302.1">
    <molecule id="P21980-1"/>
</dbReference>
<dbReference type="PIR" id="A39045">
    <property type="entry name" value="A39045"/>
</dbReference>
<dbReference type="PIR" id="A44302">
    <property type="entry name" value="A44302"/>
</dbReference>
<dbReference type="PIR" id="S68092">
    <property type="entry name" value="S68092"/>
</dbReference>
<dbReference type="RefSeq" id="NP_001310245.1">
    <molecule id="P21980-1"/>
    <property type="nucleotide sequence ID" value="NM_001323316.2"/>
</dbReference>
<dbReference type="RefSeq" id="NP_004604.2">
    <molecule id="P21980-1"/>
    <property type="nucleotide sequence ID" value="NM_004613.3"/>
</dbReference>
<dbReference type="RefSeq" id="NP_945189.1">
    <molecule id="P21980-2"/>
    <property type="nucleotide sequence ID" value="NM_198951.3"/>
</dbReference>
<dbReference type="RefSeq" id="XP_011527330.1">
    <molecule id="P21980-1"/>
    <property type="nucleotide sequence ID" value="XM_011529028.2"/>
</dbReference>
<dbReference type="RefSeq" id="XP_054179934.1">
    <molecule id="P21980-1"/>
    <property type="nucleotide sequence ID" value="XM_054323959.1"/>
</dbReference>
<dbReference type="RefSeq" id="XP_054179935.1">
    <molecule id="P21980-1"/>
    <property type="nucleotide sequence ID" value="XM_054323960.1"/>
</dbReference>
<dbReference type="PDB" id="1KV3">
    <property type="method" value="X-ray"/>
    <property type="resolution" value="2.80 A"/>
    <property type="chains" value="A/B/C/D/E/F=1-687"/>
</dbReference>
<dbReference type="PDB" id="2Q3Z">
    <property type="method" value="X-ray"/>
    <property type="resolution" value="2.00 A"/>
    <property type="chains" value="A=1-687"/>
</dbReference>
<dbReference type="PDB" id="3LY6">
    <property type="method" value="X-ray"/>
    <property type="resolution" value="3.14 A"/>
    <property type="chains" value="A/B/C=1-687"/>
</dbReference>
<dbReference type="PDB" id="3S3J">
    <property type="method" value="X-ray"/>
    <property type="resolution" value="2.25 A"/>
    <property type="chains" value="A=2-687"/>
</dbReference>
<dbReference type="PDB" id="3S3P">
    <property type="method" value="X-ray"/>
    <property type="resolution" value="2.50 A"/>
    <property type="chains" value="A=2-687"/>
</dbReference>
<dbReference type="PDB" id="3S3S">
    <property type="method" value="X-ray"/>
    <property type="resolution" value="2.30 A"/>
    <property type="chains" value="A=2-687"/>
</dbReference>
<dbReference type="PDB" id="4PYG">
    <property type="method" value="X-ray"/>
    <property type="resolution" value="2.80 A"/>
    <property type="chains" value="A/B/E=1-687"/>
</dbReference>
<dbReference type="PDB" id="6A8P">
    <property type="method" value="X-ray"/>
    <property type="resolution" value="2.54 A"/>
    <property type="chains" value="A/B/C=1-687"/>
</dbReference>
<dbReference type="PDB" id="6KZB">
    <property type="method" value="X-ray"/>
    <property type="resolution" value="3.35 A"/>
    <property type="chains" value="A/B/C=1-687"/>
</dbReference>
<dbReference type="PDB" id="8TR9">
    <property type="method" value="EM"/>
    <property type="resolution" value="3.20 A"/>
    <property type="chains" value="A=1-687"/>
</dbReference>
<dbReference type="PDB" id="9BC2">
    <property type="method" value="X-ray"/>
    <property type="resolution" value="2.75 A"/>
    <property type="chains" value="A=1-687"/>
</dbReference>
<dbReference type="PDB" id="9BC3">
    <property type="method" value="X-ray"/>
    <property type="resolution" value="2.52 A"/>
    <property type="chains" value="A/B=1-687"/>
</dbReference>
<dbReference type="PDB" id="9BC4">
    <property type="method" value="X-ray"/>
    <property type="resolution" value="1.84 A"/>
    <property type="chains" value="A=1-687"/>
</dbReference>
<dbReference type="PDBsum" id="1KV3"/>
<dbReference type="PDBsum" id="2Q3Z"/>
<dbReference type="PDBsum" id="3LY6"/>
<dbReference type="PDBsum" id="3S3J"/>
<dbReference type="PDBsum" id="3S3P"/>
<dbReference type="PDBsum" id="3S3S"/>
<dbReference type="PDBsum" id="4PYG"/>
<dbReference type="PDBsum" id="6A8P"/>
<dbReference type="PDBsum" id="6KZB"/>
<dbReference type="PDBsum" id="8TR9"/>
<dbReference type="PDBsum" id="9BC2"/>
<dbReference type="PDBsum" id="9BC3"/>
<dbReference type="PDBsum" id="9BC4"/>
<dbReference type="EMDB" id="EMD-41574"/>
<dbReference type="EMDB" id="EMD-42356"/>
<dbReference type="SASBDB" id="P21980"/>
<dbReference type="SMR" id="P21980"/>
<dbReference type="BioGRID" id="112910">
    <property type="interactions" value="217"/>
</dbReference>
<dbReference type="CORUM" id="P21980"/>
<dbReference type="DIP" id="DIP-33557N"/>
<dbReference type="FunCoup" id="P21980">
    <property type="interactions" value="565"/>
</dbReference>
<dbReference type="IntAct" id="P21980">
    <property type="interactions" value="98"/>
</dbReference>
<dbReference type="MINT" id="P21980"/>
<dbReference type="STRING" id="9606.ENSP00000355330"/>
<dbReference type="BindingDB" id="P21980"/>
<dbReference type="ChEMBL" id="CHEMBL2730"/>
<dbReference type="DrugBank" id="DB13853">
    <property type="generic name" value="Anethole trithione"/>
</dbReference>
<dbReference type="DrugBank" id="DB12116">
    <property type="generic name" value="Epigallocatechin gallate"/>
</dbReference>
<dbReference type="DrugBank" id="DB04315">
    <property type="generic name" value="Guanosine-5'-Diphosphate"/>
</dbReference>
<dbReference type="DrugBank" id="DB11254">
    <property type="generic name" value="Hexylresorcinol"/>
</dbReference>
<dbReference type="DrugBank" id="DB00130">
    <property type="generic name" value="L-Glutamine"/>
</dbReference>
<dbReference type="DrugBank" id="DB12539">
    <property type="generic name" value="Oltipraz"/>
</dbReference>
<dbReference type="GuidetoPHARMACOLOGY" id="3015"/>
<dbReference type="MoonProt" id="P21980"/>
<dbReference type="GlyGen" id="P21980">
    <property type="glycosylation" value="2 sites, 1 O-linked glycan (1 site)"/>
</dbReference>
<dbReference type="iPTMnet" id="P21980"/>
<dbReference type="MetOSite" id="P21980"/>
<dbReference type="PhosphoSitePlus" id="P21980"/>
<dbReference type="SwissPalm" id="P21980"/>
<dbReference type="BioMuta" id="TGM2"/>
<dbReference type="DMDM" id="20141877"/>
<dbReference type="CPTAC" id="CPTAC-1644"/>
<dbReference type="CPTAC" id="CPTAC-280"/>
<dbReference type="CPTAC" id="CPTAC-281"/>
<dbReference type="jPOST" id="P21980"/>
<dbReference type="MassIVE" id="P21980"/>
<dbReference type="PaxDb" id="9606-ENSP00000355330"/>
<dbReference type="PeptideAtlas" id="P21980"/>
<dbReference type="ProteomicsDB" id="53947">
    <molecule id="P21980-1"/>
</dbReference>
<dbReference type="ProteomicsDB" id="53948">
    <molecule id="P21980-2"/>
</dbReference>
<dbReference type="ProteomicsDB" id="53949">
    <molecule id="P21980-3"/>
</dbReference>
<dbReference type="Pumba" id="P21980"/>
<dbReference type="ABCD" id="P21980">
    <property type="antibodies" value="17 sequenced antibodies"/>
</dbReference>
<dbReference type="Antibodypedia" id="3611">
    <property type="antibodies" value="1304 antibodies from 47 providers"/>
</dbReference>
<dbReference type="DNASU" id="7052"/>
<dbReference type="YCharOS" id="P21980">
    <property type="antibodies" value="Tested 18 antibodies from 9 manufacturers"/>
</dbReference>
<dbReference type="Ensembl" id="ENST00000361475.7">
    <molecule id="P21980-1"/>
    <property type="protein sequence ID" value="ENSP00000355330.2"/>
    <property type="gene ID" value="ENSG00000198959.12"/>
</dbReference>
<dbReference type="GeneID" id="7052"/>
<dbReference type="KEGG" id="hsa:7052"/>
<dbReference type="MANE-Select" id="ENST00000361475.7">
    <property type="protein sequence ID" value="ENSP00000355330.2"/>
    <property type="RefSeq nucleotide sequence ID" value="NM_004613.4"/>
    <property type="RefSeq protein sequence ID" value="NP_004604.2"/>
</dbReference>
<dbReference type="AGR" id="HGNC:11778"/>
<dbReference type="CTD" id="7052"/>
<dbReference type="DisGeNET" id="7052"/>
<dbReference type="GeneCards" id="TGM2"/>
<dbReference type="HGNC" id="HGNC:11778">
    <property type="gene designation" value="TGM2"/>
</dbReference>
<dbReference type="HPA" id="ENSG00000198959">
    <property type="expression patterns" value="Tissue enhanced (cervix)"/>
</dbReference>
<dbReference type="MalaCards" id="TGM2"/>
<dbReference type="MIM" id="190196">
    <property type="type" value="gene"/>
</dbReference>
<dbReference type="neXtProt" id="NX_P21980"/>
<dbReference type="OpenTargets" id="ENSG00000198959"/>
<dbReference type="PharmGKB" id="PA36491"/>
<dbReference type="VEuPathDB" id="HostDB:ENSG00000198959"/>
<dbReference type="eggNOG" id="ENOG502QUSX">
    <property type="taxonomic scope" value="Eukaryota"/>
</dbReference>
<dbReference type="GeneTree" id="ENSGT01050000244866"/>
<dbReference type="HOGENOM" id="CLU_013435_1_0_1"/>
<dbReference type="InParanoid" id="P21980"/>
<dbReference type="OMA" id="CTVGPGE"/>
<dbReference type="OrthoDB" id="437511at2759"/>
<dbReference type="PAN-GO" id="P21980">
    <property type="GO annotations" value="3 GO annotations based on evolutionary models"/>
</dbReference>
<dbReference type="PhylomeDB" id="P21980"/>
<dbReference type="TreeFam" id="TF324278"/>
<dbReference type="BRENDA" id="2.3.2.13">
    <property type="organism ID" value="2681"/>
</dbReference>
<dbReference type="PathwayCommons" id="P21980"/>
<dbReference type="SignaLink" id="P21980"/>
<dbReference type="SIGNOR" id="P21980"/>
<dbReference type="BioGRID-ORCS" id="7052">
    <property type="hits" value="14 hits in 1164 CRISPR screens"/>
</dbReference>
<dbReference type="ChiTaRS" id="TGM2">
    <property type="organism name" value="human"/>
</dbReference>
<dbReference type="EvolutionaryTrace" id="P21980"/>
<dbReference type="GeneWiki" id="Tissue_transglutaminase"/>
<dbReference type="GenomeRNAi" id="7052"/>
<dbReference type="Pharos" id="P21980">
    <property type="development level" value="Tchem"/>
</dbReference>
<dbReference type="PRO" id="PR:P21980"/>
<dbReference type="Proteomes" id="UP000005640">
    <property type="component" value="Chromosome 20"/>
</dbReference>
<dbReference type="RNAct" id="P21980">
    <property type="molecule type" value="protein"/>
</dbReference>
<dbReference type="Bgee" id="ENSG00000198959">
    <property type="expression patterns" value="Expressed in type B pancreatic cell and 174 other cell types or tissues"/>
</dbReference>
<dbReference type="ExpressionAtlas" id="P21980">
    <property type="expression patterns" value="baseline and differential"/>
</dbReference>
<dbReference type="GO" id="GO:0000785">
    <property type="term" value="C:chromatin"/>
    <property type="evidence" value="ECO:0000314"/>
    <property type="project" value="UniProtKB"/>
</dbReference>
<dbReference type="GO" id="GO:0062023">
    <property type="term" value="C:collagen-containing extracellular matrix"/>
    <property type="evidence" value="ECO:0007005"/>
    <property type="project" value="BHF-UCL"/>
</dbReference>
<dbReference type="GO" id="GO:0005829">
    <property type="term" value="C:cytosol"/>
    <property type="evidence" value="ECO:0000314"/>
    <property type="project" value="HPA"/>
</dbReference>
<dbReference type="GO" id="GO:0005783">
    <property type="term" value="C:endoplasmic reticulum"/>
    <property type="evidence" value="ECO:0007669"/>
    <property type="project" value="GOC"/>
</dbReference>
<dbReference type="GO" id="GO:0070062">
    <property type="term" value="C:extracellular exosome"/>
    <property type="evidence" value="ECO:0007005"/>
    <property type="project" value="UniProtKB"/>
</dbReference>
<dbReference type="GO" id="GO:0031012">
    <property type="term" value="C:extracellular matrix"/>
    <property type="evidence" value="ECO:0000314"/>
    <property type="project" value="UniProtKB"/>
</dbReference>
<dbReference type="GO" id="GO:0005925">
    <property type="term" value="C:focal adhesion"/>
    <property type="evidence" value="ECO:0007005"/>
    <property type="project" value="UniProtKB"/>
</dbReference>
<dbReference type="GO" id="GO:0005739">
    <property type="term" value="C:mitochondrion"/>
    <property type="evidence" value="ECO:0000314"/>
    <property type="project" value="UniProtKB"/>
</dbReference>
<dbReference type="GO" id="GO:0000786">
    <property type="term" value="C:nucleosome"/>
    <property type="evidence" value="ECO:0000314"/>
    <property type="project" value="UniProt"/>
</dbReference>
<dbReference type="GO" id="GO:0005634">
    <property type="term" value="C:nucleus"/>
    <property type="evidence" value="ECO:0000314"/>
    <property type="project" value="UniProtKB"/>
</dbReference>
<dbReference type="GO" id="GO:0048471">
    <property type="term" value="C:perinuclear region of cytoplasm"/>
    <property type="evidence" value="ECO:0000314"/>
    <property type="project" value="UniProtKB"/>
</dbReference>
<dbReference type="GO" id="GO:0005886">
    <property type="term" value="C:plasma membrane"/>
    <property type="evidence" value="ECO:0000314"/>
    <property type="project" value="HPA"/>
</dbReference>
<dbReference type="GO" id="GO:0005509">
    <property type="term" value="F:calcium ion binding"/>
    <property type="evidence" value="ECO:0000314"/>
    <property type="project" value="UniProtKB"/>
</dbReference>
<dbReference type="GO" id="GO:0005525">
    <property type="term" value="F:GTP binding"/>
    <property type="evidence" value="ECO:0000314"/>
    <property type="project" value="UniProtKB"/>
</dbReference>
<dbReference type="GO" id="GO:0120297">
    <property type="term" value="F:histone dopaminyltransferase activity"/>
    <property type="evidence" value="ECO:0000314"/>
    <property type="project" value="UniProtKB"/>
</dbReference>
<dbReference type="GO" id="GO:0120295">
    <property type="term" value="F:histone serotonyltransferase activity"/>
    <property type="evidence" value="ECO:0000314"/>
    <property type="project" value="UniProtKB"/>
</dbReference>
<dbReference type="GO" id="GO:0008233">
    <property type="term" value="F:peptidase activity"/>
    <property type="evidence" value="ECO:0007669"/>
    <property type="project" value="UniProtKB-KW"/>
</dbReference>
<dbReference type="GO" id="GO:0120299">
    <property type="term" value="F:peptide histaminyltransferase activity"/>
    <property type="evidence" value="ECO:0000314"/>
    <property type="project" value="UniProtKB"/>
</dbReference>
<dbReference type="GO" id="GO:0120298">
    <property type="term" value="F:peptide noradrenalinyltransferase activity"/>
    <property type="evidence" value="ECO:0007669"/>
    <property type="project" value="RHEA"/>
</dbReference>
<dbReference type="GO" id="GO:0003810">
    <property type="term" value="F:protein-glutamine gamma-glutamyltransferase activity"/>
    <property type="evidence" value="ECO:0000314"/>
    <property type="project" value="UniProtKB"/>
</dbReference>
<dbReference type="GO" id="GO:0050568">
    <property type="term" value="F:protein-glutamine glutaminase activity"/>
    <property type="evidence" value="ECO:0000314"/>
    <property type="project" value="UniProtKB"/>
</dbReference>
<dbReference type="GO" id="GO:0043277">
    <property type="term" value="P:apoptotic cell clearance"/>
    <property type="evidence" value="ECO:0000314"/>
    <property type="project" value="UniProtKB"/>
</dbReference>
<dbReference type="GO" id="GO:0060348">
    <property type="term" value="P:bone development"/>
    <property type="evidence" value="ECO:0000250"/>
    <property type="project" value="UniProtKB"/>
</dbReference>
<dbReference type="GO" id="GO:0060445">
    <property type="term" value="P:branching involved in salivary gland morphogenesis"/>
    <property type="evidence" value="ECO:0007669"/>
    <property type="project" value="Ensembl"/>
</dbReference>
<dbReference type="GO" id="GO:0071314">
    <property type="term" value="P:cellular response to cocaine"/>
    <property type="evidence" value="ECO:0000314"/>
    <property type="project" value="UniProtKB"/>
</dbReference>
<dbReference type="GO" id="GO:1903351">
    <property type="term" value="P:cellular response to dopamine"/>
    <property type="evidence" value="ECO:0000314"/>
    <property type="project" value="UniProtKB"/>
</dbReference>
<dbReference type="GO" id="GO:1904015">
    <property type="term" value="P:cellular response to serotonin"/>
    <property type="evidence" value="ECO:0000314"/>
    <property type="project" value="UniProtKB"/>
</dbReference>
<dbReference type="GO" id="GO:0014046">
    <property type="term" value="P:dopamine secretion"/>
    <property type="evidence" value="ECO:0000314"/>
    <property type="project" value="UniProt"/>
</dbReference>
<dbReference type="GO" id="GO:0010467">
    <property type="term" value="P:gene expression"/>
    <property type="evidence" value="ECO:0000314"/>
    <property type="project" value="UniProt"/>
</dbReference>
<dbReference type="GO" id="GO:0032471">
    <property type="term" value="P:negative regulation of endoplasmic reticulum calcium ion concentration"/>
    <property type="evidence" value="ECO:0000315"/>
    <property type="project" value="UniProtKB"/>
</dbReference>
<dbReference type="GO" id="GO:0018149">
    <property type="term" value="P:peptide cross-linking"/>
    <property type="evidence" value="ECO:0000314"/>
    <property type="project" value="UniProtKB"/>
</dbReference>
<dbReference type="GO" id="GO:0007200">
    <property type="term" value="P:phospholipase C-activating G protein-coupled receptor signaling pathway"/>
    <property type="evidence" value="ECO:0000315"/>
    <property type="project" value="UniProtKB"/>
</dbReference>
<dbReference type="GO" id="GO:0043065">
    <property type="term" value="P:positive regulation of apoptotic process"/>
    <property type="evidence" value="ECO:0000314"/>
    <property type="project" value="UniProtKB"/>
</dbReference>
<dbReference type="GO" id="GO:0045785">
    <property type="term" value="P:positive regulation of cell adhesion"/>
    <property type="evidence" value="ECO:0000250"/>
    <property type="project" value="UniProtKB"/>
</dbReference>
<dbReference type="GO" id="GO:0043547">
    <property type="term" value="P:positive regulation of GTPase activity"/>
    <property type="evidence" value="ECO:0000250"/>
    <property type="project" value="UniProtKB"/>
</dbReference>
<dbReference type="GO" id="GO:0051561">
    <property type="term" value="P:positive regulation of mitochondrial calcium ion concentration"/>
    <property type="evidence" value="ECO:0000315"/>
    <property type="project" value="UniProtKB"/>
</dbReference>
<dbReference type="GO" id="GO:0050769">
    <property type="term" value="P:positive regulation of neurogenesis"/>
    <property type="evidence" value="ECO:0000314"/>
    <property type="project" value="UniProtKB"/>
</dbReference>
<dbReference type="GO" id="GO:0051057">
    <property type="term" value="P:positive regulation of small GTPase mediated signal transduction"/>
    <property type="evidence" value="ECO:0000250"/>
    <property type="project" value="UniProtKB"/>
</dbReference>
<dbReference type="GO" id="GO:1903672">
    <property type="term" value="P:positive regulation of sprouting angiogenesis"/>
    <property type="evidence" value="ECO:0000314"/>
    <property type="project" value="UniProtKB"/>
</dbReference>
<dbReference type="GO" id="GO:0018277">
    <property type="term" value="P:protein deamination"/>
    <property type="evidence" value="ECO:0000314"/>
    <property type="project" value="UniProtKB"/>
</dbReference>
<dbReference type="GO" id="GO:0051260">
    <property type="term" value="P:protein homooligomerization"/>
    <property type="evidence" value="ECO:0000314"/>
    <property type="project" value="UniProtKB"/>
</dbReference>
<dbReference type="GO" id="GO:0006508">
    <property type="term" value="P:proteolysis"/>
    <property type="evidence" value="ECO:0007669"/>
    <property type="project" value="UniProtKB-KW"/>
</dbReference>
<dbReference type="GO" id="GO:2000425">
    <property type="term" value="P:regulation of apoptotic cell clearance"/>
    <property type="evidence" value="ECO:0000314"/>
    <property type="project" value="UniProtKB"/>
</dbReference>
<dbReference type="GO" id="GO:0042981">
    <property type="term" value="P:regulation of apoptotic process"/>
    <property type="evidence" value="ECO:0000314"/>
    <property type="project" value="UniProtKB"/>
</dbReference>
<dbReference type="GO" id="GO:0060662">
    <property type="term" value="P:salivary gland cavitation"/>
    <property type="evidence" value="ECO:0007669"/>
    <property type="project" value="Ensembl"/>
</dbReference>
<dbReference type="FunFam" id="2.60.40.10:FF:000090">
    <property type="entry name" value="Protein-glutamine gamma-glutamyltransferase 2"/>
    <property type="match status" value="1"/>
</dbReference>
<dbReference type="FunFam" id="2.60.40.10:FF:000278">
    <property type="entry name" value="Protein-glutamine gamma-glutamyltransferase 2"/>
    <property type="match status" value="1"/>
</dbReference>
<dbReference type="FunFam" id="2.60.40.10:FF:001042">
    <property type="entry name" value="Protein-glutamine gamma-glutamyltransferase 2"/>
    <property type="match status" value="1"/>
</dbReference>
<dbReference type="FunFam" id="3.90.260.10:FF:000001">
    <property type="entry name" value="Protein-glutamine gamma-glutamyltransferase 2"/>
    <property type="match status" value="1"/>
</dbReference>
<dbReference type="Gene3D" id="2.60.40.10">
    <property type="entry name" value="Immunoglobulins"/>
    <property type="match status" value="3"/>
</dbReference>
<dbReference type="Gene3D" id="3.90.260.10">
    <property type="entry name" value="Transglutaminase-like"/>
    <property type="match status" value="1"/>
</dbReference>
<dbReference type="InterPro" id="IPR013783">
    <property type="entry name" value="Ig-like_fold"/>
</dbReference>
<dbReference type="InterPro" id="IPR014756">
    <property type="entry name" value="Ig_E-set"/>
</dbReference>
<dbReference type="InterPro" id="IPR038765">
    <property type="entry name" value="Papain-like_cys_pep_sf"/>
</dbReference>
<dbReference type="InterPro" id="IPR050779">
    <property type="entry name" value="Transglutaminase"/>
</dbReference>
<dbReference type="InterPro" id="IPR002931">
    <property type="entry name" value="Transglutaminase-like"/>
</dbReference>
<dbReference type="InterPro" id="IPR036985">
    <property type="entry name" value="Transglutaminase-like_sf"/>
</dbReference>
<dbReference type="InterPro" id="IPR023608">
    <property type="entry name" value="Transglutaminase_animal"/>
</dbReference>
<dbReference type="InterPro" id="IPR013808">
    <property type="entry name" value="Transglutaminase_AS"/>
</dbReference>
<dbReference type="InterPro" id="IPR008958">
    <property type="entry name" value="Transglutaminase_C"/>
</dbReference>
<dbReference type="InterPro" id="IPR036238">
    <property type="entry name" value="Transglutaminase_C_sf"/>
</dbReference>
<dbReference type="InterPro" id="IPR001102">
    <property type="entry name" value="Transglutaminase_N"/>
</dbReference>
<dbReference type="PANTHER" id="PTHR11590">
    <property type="entry name" value="PROTEIN-GLUTAMINE GAMMA-GLUTAMYLTRANSFERASE"/>
    <property type="match status" value="1"/>
</dbReference>
<dbReference type="PANTHER" id="PTHR11590:SF6">
    <property type="entry name" value="PROTEIN-GLUTAMINE GAMMA-GLUTAMYLTRANSFERASE 2"/>
    <property type="match status" value="1"/>
</dbReference>
<dbReference type="Pfam" id="PF00927">
    <property type="entry name" value="Transglut_C"/>
    <property type="match status" value="2"/>
</dbReference>
<dbReference type="Pfam" id="PF01841">
    <property type="entry name" value="Transglut_core"/>
    <property type="match status" value="1"/>
</dbReference>
<dbReference type="Pfam" id="PF00868">
    <property type="entry name" value="Transglut_N"/>
    <property type="match status" value="1"/>
</dbReference>
<dbReference type="PIRSF" id="PIRSF000459">
    <property type="entry name" value="TGM_EBP42"/>
    <property type="match status" value="1"/>
</dbReference>
<dbReference type="SMART" id="SM00460">
    <property type="entry name" value="TGc"/>
    <property type="match status" value="1"/>
</dbReference>
<dbReference type="SUPFAM" id="SSF54001">
    <property type="entry name" value="Cysteine proteinases"/>
    <property type="match status" value="1"/>
</dbReference>
<dbReference type="SUPFAM" id="SSF81296">
    <property type="entry name" value="E set domains"/>
    <property type="match status" value="1"/>
</dbReference>
<dbReference type="SUPFAM" id="SSF49309">
    <property type="entry name" value="Transglutaminase, two C-terminal domains"/>
    <property type="match status" value="2"/>
</dbReference>
<dbReference type="PROSITE" id="PS00547">
    <property type="entry name" value="TRANSGLUTAMINASES"/>
    <property type="match status" value="1"/>
</dbReference>
<sequence length="687" mass="77329">MAEELVLERCDLELETNGRDHHTADLCREKLVVRRGQPFWLTLHFEGRNYEASVDSLTFSVVTGPAPSQEAGTKARFPLRDAVEEGDWTATVVDQQDCTLSLQLTTPANAPIGLYRLSLEASTGYQGSSFVLGHFILLFNAWCPADAVYLDSEEERQEYVLTQQGFIYQGSAKFIKNIPWNFGQFEDGILDICLILLDVNPKFLKNAGRDCSRRSSPVYVGRVVSGMVNCNDDQGVLLGRWDNNYGDGVSPMSWIGSVDILRRWKNHGCQRVKYGQCWVFAAVACTVLRCLGIPTRVVTNYNSAHDQNSNLLIEYFRNEFGEIQGDKSEMIWNFHCWVESWMTRPDLQPGYEGWQALDPTPQEKSEGTYCCGPVPVRAIKEGDLSTKYDAPFVFAEVNADVVDWIQQDDGSVHKSINRSLIVGLKISTKSVGRDEREDITHTYKYPEGSSEEREAFTRANHLNKLAEKEETGMAMRIRVGQSMNMGSDFDVFAHITNNTAEEYVCRLLLCARTVSYNGILGPECGTKYLLNLNLEPFSEKSVPLCILYEKYRDCLTESNLIKVRALLVEPVINSYLLAERDLYLENPEIKIRILGEPKQKRKLVAEVSLQNPLPVALEGCTFTVEGAGLTEEQKTVEIPDPVEAGEEVKVRMDLLPLHMGLHKLVVNFESDKLKAVKGFRNVIIGPA</sequence>
<comment type="function">
    <text evidence="2 3 7 10 14 16 17 18 19 21 22 23 26 28 29 30 31 32 33 34 35 37 39 50">Calcium-dependent acyltransferase that catalyzes the formation of covalent bonds between peptide-bound glutamine and various primary amines, such as gamma-amino group of peptide-bound lysine, or mono- and polyamines, thereby producing cross-linked or aminated proteins, respectively (PubMed:23941696, PubMed:31991788, PubMed:9252372). Involved in many biological processes, such as bone development, angiogenesis, wound healing, cellular differentiation, chromatin modification and apoptosis (PubMed:1683874, PubMed:27270573, PubMed:28198360, PubMed:7935379, PubMed:9252372). Acts as a protein-glutamine gamma-glutamyltransferase by mediating the cross-linking of proteins, such as ACO2, HSPB6, FN1, HMGB1, RAP1GDS1, SLC25A4/ANT1, SPP1 and WDR54 (PubMed:23941696, PubMed:24349085, PubMed:29618516, PubMed:30458214). Under physiological conditions, the protein cross-linking activity is inhibited by GTP; inhibition is relieved by Ca(2+) in response to various stresses (PubMed:18092889, PubMed:7592956, PubMed:7649299). When secreted, catalyzes cross-linking of proteins of the extracellular matrix, such as FN1 and SPP1 resulting in the formation of scaffolds (PubMed:12506096). Plays a key role during apoptosis, both by (1) promoting the cross-linking of cytoskeletal proteins resulting in condensation of the cytoplasm, and by (2) mediating cross-linking proteins of the extracellular matrix, resulting in the irreversible formation of scaffolds that stabilize the integrity of the dying cells before their clearance by phagocytosis, thereby preventing the leakage of harmful intracellular components (PubMed:7935379, PubMed:9252372). In addition to protein cross-linking, can use different monoamine substrates to catalyze a vast array of protein post-translational modifications: mediates aminylation of serotonin, dopamine, noradrenaline or histamine into glutamine residues of target proteins to generate protein serotonylation, dopaminylation, noradrenalinylation or histaminylation, respectively (PubMed:23797785, PubMed:30867594). Mediates protein serotonylation of small GTPases during activation and aggregation of platelets, leading to constitutive activation of these GTPases (By similarity). Plays a key role in chromatin organization by mediating serotonylation and dopaminylation of histone H3 (PubMed:30867594, PubMed:32273471). Catalyzes serotonylation of 'Gln-5' of histone H3 (H3Q5ser) during serotonergic neuron differentiation, thereby facilitating transcription (PubMed:30867594). Acts as a mediator of neurotransmission-independent role of nuclear dopamine in ventral tegmental area (VTA) neurons: catalyzes dopaminylation of 'Gln-5' of histone H3 (H3Q5dop), thereby regulating relapse-related transcriptional plasticity in the reward system (PubMed:32273471). Regulates vein remodeling by mediating serotonylation and subsequent inactivation of ATP2A2/SERCA2 (By similarity). Also acts as a protein deamidase by mediating the side chain deamidation of specific glutamine residues of proteins to glutamate (PubMed:20547769, PubMed:9623982). Catalyzes specific deamidation of protein gliadin, a component of wheat gluten in the diet (PubMed:9623982). May also act as an isopeptidase cleaving the previously formed cross-links (PubMed:26250429, PubMed:27131890). Also able to participate in signaling pathways independently of its acyltransferase activity: acts as a signal transducer in alpha-1 adrenergic receptor-mediated stimulation of phospholipase C-delta (PLCD) activity and is required for coupling alpha-1 adrenergic agonists to the stimulation of phosphoinositide lipid metabolism (PubMed:8943303).</text>
</comment>
<comment type="function">
    <molecule>Isoform 2</molecule>
    <text evidence="12">Has cytotoxic activity: is able to induce apoptosis independently of its acyltransferase activity.</text>
</comment>
<comment type="catalytic activity">
    <reaction evidence="6 18 19 30">
        <text>L-glutaminyl-[protein] + L-lysyl-[protein] = [protein]-L-lysyl-N(6)-5-L-glutamyl-[protein] + NH4(+)</text>
        <dbReference type="Rhea" id="RHEA:54816"/>
        <dbReference type="Rhea" id="RHEA-COMP:9752"/>
        <dbReference type="Rhea" id="RHEA-COMP:10207"/>
        <dbReference type="Rhea" id="RHEA-COMP:14005"/>
        <dbReference type="ChEBI" id="CHEBI:28938"/>
        <dbReference type="ChEBI" id="CHEBI:29969"/>
        <dbReference type="ChEBI" id="CHEBI:30011"/>
        <dbReference type="ChEBI" id="CHEBI:138370"/>
        <dbReference type="EC" id="2.3.2.13"/>
    </reaction>
    <physiologicalReaction direction="left-to-right" evidence="18 19 30">
        <dbReference type="Rhea" id="RHEA:54817"/>
    </physiologicalReaction>
</comment>
<comment type="catalytic activity">
    <reaction evidence="29">
        <text>L-glutaminyl-[protein] + serotonin = 5-serotonyl-L-glutamyl-[protein] + NH4(+)</text>
        <dbReference type="Rhea" id="RHEA:66552"/>
        <dbReference type="Rhea" id="RHEA-COMP:10207"/>
        <dbReference type="Rhea" id="RHEA-COMP:17052"/>
        <dbReference type="ChEBI" id="CHEBI:28938"/>
        <dbReference type="ChEBI" id="CHEBI:30011"/>
        <dbReference type="ChEBI" id="CHEBI:167174"/>
        <dbReference type="ChEBI" id="CHEBI:350546"/>
    </reaction>
    <physiologicalReaction direction="left-to-right" evidence="29">
        <dbReference type="Rhea" id="RHEA:66553"/>
    </physiologicalReaction>
</comment>
<comment type="catalytic activity">
    <reaction evidence="31">
        <text>L-glutaminyl-[protein] + dopamine = 5-dopaminyl-L-glutamyl-[protein] + NH4(+)</text>
        <dbReference type="Rhea" id="RHEA:66556"/>
        <dbReference type="Rhea" id="RHEA-COMP:10207"/>
        <dbReference type="Rhea" id="RHEA-COMP:17053"/>
        <dbReference type="ChEBI" id="CHEBI:28938"/>
        <dbReference type="ChEBI" id="CHEBI:30011"/>
        <dbReference type="ChEBI" id="CHEBI:59905"/>
        <dbReference type="ChEBI" id="CHEBI:167175"/>
    </reaction>
    <physiologicalReaction direction="left-to-right" evidence="31">
        <dbReference type="Rhea" id="RHEA:66557"/>
    </physiologicalReaction>
</comment>
<comment type="catalytic activity">
    <reaction evidence="17">
        <text>L-glutaminyl-[protein] + histamine = 5-histaminyl-L-glutamyl-[protein] + NH4(+)</text>
        <dbReference type="Rhea" id="RHEA:66564"/>
        <dbReference type="Rhea" id="RHEA-COMP:10207"/>
        <dbReference type="Rhea" id="RHEA-COMP:17056"/>
        <dbReference type="ChEBI" id="CHEBI:28938"/>
        <dbReference type="ChEBI" id="CHEBI:30011"/>
        <dbReference type="ChEBI" id="CHEBI:58432"/>
        <dbReference type="ChEBI" id="CHEBI:167179"/>
    </reaction>
    <physiologicalReaction direction="left-to-right" evidence="17">
        <dbReference type="Rhea" id="RHEA:66565"/>
    </physiologicalReaction>
</comment>
<comment type="catalytic activity">
    <reaction evidence="2">
        <text>L-glutaminyl-[protein] + (R)-noradrenaline = 5-(R)-noradrenalinyl-L-glutamyl-[protein] + NH4(+)</text>
        <dbReference type="Rhea" id="RHEA:66560"/>
        <dbReference type="Rhea" id="RHEA-COMP:10207"/>
        <dbReference type="Rhea" id="RHEA-COMP:17054"/>
        <dbReference type="ChEBI" id="CHEBI:28938"/>
        <dbReference type="ChEBI" id="CHEBI:30011"/>
        <dbReference type="ChEBI" id="CHEBI:72587"/>
        <dbReference type="ChEBI" id="CHEBI:167178"/>
    </reaction>
    <physiologicalReaction direction="left-to-right" evidence="2">
        <dbReference type="Rhea" id="RHEA:66561"/>
    </physiologicalReaction>
</comment>
<comment type="catalytic activity">
    <reaction evidence="16 39">
        <text>L-glutaminyl-[protein] + H2O = L-glutamyl-[protein] + NH4(+)</text>
        <dbReference type="Rhea" id="RHEA:16441"/>
        <dbReference type="Rhea" id="RHEA-COMP:10207"/>
        <dbReference type="Rhea" id="RHEA-COMP:10208"/>
        <dbReference type="ChEBI" id="CHEBI:15377"/>
        <dbReference type="ChEBI" id="CHEBI:28938"/>
        <dbReference type="ChEBI" id="CHEBI:29973"/>
        <dbReference type="ChEBI" id="CHEBI:30011"/>
        <dbReference type="EC" id="3.5.1.44"/>
    </reaction>
    <physiologicalReaction direction="left-to-right" evidence="16 39">
        <dbReference type="Rhea" id="RHEA:16442"/>
    </physiologicalReaction>
</comment>
<comment type="cofactor">
    <cofactor evidence="30 62">
        <name>Ca(2+)</name>
        <dbReference type="ChEBI" id="CHEBI:29108"/>
    </cofactor>
</comment>
<comment type="activity regulation">
    <text evidence="14 23 24 25 30 32">Acyltransferase activity is regulated by the binding of GTP and Ca(2+): inactivated by GTP, which stabilizes its closed structure, thereby obstructing the accessibility of substrates to the active sites (PubMed:18092889, PubMed:2903073, PubMed:31991788, PubMed:7592956). In contrast, Ca(2+) acts as a cofactor by inducing conformational change to the active open form (PubMed:18092889, PubMed:2903073, PubMed:31991788). In absence of Ca(2+), Mg(2+) may bind Ca(2+)-binding sites, promoting GTP-binding and subsequent inhibition of the acyltransferase activity (PubMed:31991788). Extracellularly reduced and activated by CLIC3 (PubMed:28198360). Specifically inhibited by compound VA4 ((S)-Benzyl (6-Acrylamido-1-(4-((5-(dimethylamino)naphthalen-1-yl)sulfonyl)piperazin-1-yl)-1-oxohexan-2-yl)carbamate), which specifically abolishes both the transamidation and GTP-binding activities (PubMed:28858494).</text>
</comment>
<comment type="biophysicochemical properties">
    <kinetics>
        <KM evidence="16">11.2 mM for benzyloxycarbonyl-Gln-Gly (for protein-glutamine deamidase activity)</KM>
        <text evidence="16">kcat is 11.2 min(-1) with benzyloxycarbonyl-Gln-Gly substrate for protein-glutamine deamidase activity.</text>
    </kinetics>
</comment>
<comment type="subunit">
    <text evidence="5 20 32">Monomer (PubMed:25192068). Interacts with phospholipase C; promoting alpha-1 adrenergic receptor signaling (PubMed:7592956). Interacts with PLCD1 (By similarity).</text>
</comment>
<comment type="subunit">
    <molecule>Isoform 2</molecule>
    <text evidence="12">Homooligomer.</text>
</comment>
<comment type="interaction">
    <interactant intactId="EBI-727668">
        <id>P21980</id>
    </interactant>
    <interactant intactId="EBI-1373806">
        <id>Q12802</id>
        <label>AKAP13</label>
    </interactant>
    <organismsDiffer>false</organismsDiffer>
    <experiments>4</experiments>
</comment>
<comment type="interaction">
    <interactant intactId="EBI-727668">
        <id>P21980</id>
    </interactant>
    <interactant intactId="EBI-821758">
        <id>PRO_0000000092</id>
        <label>APP</label>
        <dbReference type="UniProtKB" id="P05067"/>
    </interactant>
    <organismsDiffer>false</organismsDiffer>
    <experiments>2</experiments>
</comment>
<comment type="interaction">
    <interactant intactId="EBI-727668">
        <id>P21980</id>
    </interactant>
    <interactant intactId="EBI-2566375">
        <id>PRO_0000005794</id>
        <label>COL18A1</label>
        <dbReference type="UniProtKB" id="P39060"/>
    </interactant>
    <organismsDiffer>false</organismsDiffer>
    <experiments>2</experiments>
</comment>
<comment type="interaction">
    <interactant intactId="EBI-727668">
        <id>P21980</id>
    </interactant>
    <interactant intactId="EBI-1220319">
        <id>P02751</id>
        <label>FN1</label>
    </interactant>
    <organismsDiffer>false</organismsDiffer>
    <experiments>5</experiments>
</comment>
<comment type="interaction">
    <interactant intactId="EBI-727668">
        <id>P21980</id>
    </interactant>
    <interactant intactId="EBI-742756">
        <id>P08727</id>
        <label>KRT19</label>
    </interactant>
    <organismsDiffer>false</organismsDiffer>
    <experiments>2</experiments>
</comment>
<comment type="interaction">
    <interactant intactId="EBI-727668">
        <id>P21980</id>
    </interactant>
    <interactant intactId="EBI-20724846">
        <id>PRO_0000018520</id>
        <label>LOX</label>
        <dbReference type="UniProtKB" id="P28300"/>
    </interactant>
    <organismsDiffer>false</organismsDiffer>
    <experiments>3</experiments>
</comment>
<comment type="interaction">
    <interactant intactId="EBI-727668">
        <id>P21980</id>
    </interactant>
    <interactant intactId="EBI-73886">
        <id>Q04206</id>
        <label>RELA</label>
    </interactant>
    <organismsDiffer>false</organismsDiffer>
    <experiments>3</experiments>
</comment>
<comment type="interaction">
    <interactant intactId="EBI-727668">
        <id>P21980</id>
    </interactant>
    <interactant intactId="EBI-301246">
        <id>P40337</id>
        <label>VHL</label>
    </interactant>
    <organismsDiffer>false</organismsDiffer>
    <experiments>10</experiments>
</comment>
<comment type="interaction">
    <interactant intactId="EBI-25842075">
        <id>P21980-2</id>
    </interactant>
    <interactant intactId="EBI-10976677">
        <id>G5E9A7</id>
        <label>DMWD</label>
    </interactant>
    <organismsDiffer>false</organismsDiffer>
    <experiments>3</experiments>
</comment>
<comment type="interaction">
    <interactant intactId="EBI-25842075">
        <id>P21980-2</id>
    </interactant>
    <interactant intactId="EBI-6896746">
        <id>O00429-3</id>
        <label>DNM1L</label>
    </interactant>
    <organismsDiffer>false</organismsDiffer>
    <experiments>3</experiments>
</comment>
<comment type="interaction">
    <interactant intactId="EBI-25842075">
        <id>P21980-2</id>
    </interactant>
    <interactant intactId="EBI-10968534">
        <id>P50570-2</id>
        <label>DNM2</label>
    </interactant>
    <organismsDiffer>false</organismsDiffer>
    <experiments>3</experiments>
</comment>
<comment type="interaction">
    <interactant intactId="EBI-25842075">
        <id>P21980-2</id>
    </interactant>
    <interactant intactId="EBI-5280572">
        <id>P29692-2</id>
        <label>EEF1D</label>
    </interactant>
    <organismsDiffer>false</organismsDiffer>
    <experiments>3</experiments>
</comment>
<comment type="interaction">
    <interactant intactId="EBI-25842075">
        <id>P21980-2</id>
    </interactant>
    <interactant intactId="EBI-25856644">
        <id>Q06787-7</id>
        <label>FMR1</label>
    </interactant>
    <organismsDiffer>false</organismsDiffer>
    <experiments>3</experiments>
</comment>
<comment type="interaction">
    <interactant intactId="EBI-25842075">
        <id>P21980-2</id>
    </interactant>
    <interactant intactId="EBI-352682">
        <id>P04792</id>
        <label>HSPB1</label>
    </interactant>
    <organismsDiffer>false</organismsDiffer>
    <experiments>3</experiments>
</comment>
<comment type="interaction">
    <interactant intactId="EBI-25842075">
        <id>P21980-2</id>
    </interactant>
    <interactant intactId="EBI-466029">
        <id>P42858</id>
        <label>HTT</label>
    </interactant>
    <organismsDiffer>false</organismsDiffer>
    <experiments>6</experiments>
</comment>
<comment type="interaction">
    <interactant intactId="EBI-25842075">
        <id>P21980-2</id>
    </interactant>
    <interactant intactId="EBI-10975473">
        <id>O60333-2</id>
        <label>KIF1B</label>
    </interactant>
    <organismsDiffer>false</organismsDiffer>
    <experiments>3</experiments>
</comment>
<comment type="interaction">
    <interactant intactId="EBI-25842075">
        <id>P21980-2</id>
    </interactant>
    <interactant intactId="EBI-50433196">
        <id>A0A6Q8PF08</id>
        <label>PMP22</label>
    </interactant>
    <organismsDiffer>false</organismsDiffer>
    <experiments>3</experiments>
</comment>
<comment type="interaction">
    <interactant intactId="EBI-25842075">
        <id>P21980-2</id>
    </interactant>
    <interactant intactId="EBI-749195">
        <id>P60891</id>
        <label>PRPS1</label>
    </interactant>
    <organismsDiffer>false</organismsDiffer>
    <experiments>3</experiments>
</comment>
<comment type="interaction">
    <interactant intactId="EBI-25842075">
        <id>P21980-2</id>
    </interactant>
    <interactant intactId="EBI-1050546">
        <id>Q5T160</id>
        <label>RARS2</label>
    </interactant>
    <organismsDiffer>false</organismsDiffer>
    <experiments>3</experiments>
</comment>
<comment type="interaction">
    <interactant intactId="EBI-25842075">
        <id>P21980-2</id>
    </interactant>
    <interactant intactId="EBI-752324">
        <id>Q8N488</id>
        <label>RYBP</label>
    </interactant>
    <organismsDiffer>false</organismsDiffer>
    <experiments>3</experiments>
</comment>
<comment type="interaction">
    <interactant intactId="EBI-25842075">
        <id>P21980-2</id>
    </interactant>
    <interactant intactId="EBI-745901">
        <id>Q14141</id>
        <label>SEPTIN6</label>
    </interactant>
    <organismsDiffer>false</organismsDiffer>
    <experiments>3</experiments>
</comment>
<comment type="interaction">
    <interactant intactId="EBI-25842075">
        <id>P21980-2</id>
    </interactant>
    <interactant intactId="EBI-9087806">
        <id>O95416</id>
        <label>SOX14</label>
    </interactant>
    <organismsDiffer>false</organismsDiffer>
    <experiments>3</experiments>
</comment>
<comment type="interaction">
    <interactant intactId="EBI-25842075">
        <id>P21980-2</id>
    </interactant>
    <interactant intactId="EBI-5235340">
        <id>Q7Z699</id>
        <label>SPRED1</label>
    </interactant>
    <organismsDiffer>false</organismsDiffer>
    <experiments>3</experiments>
</comment>
<comment type="interaction">
    <interactant intactId="EBI-25842075">
        <id>P21980-2</id>
    </interactant>
    <interactant intactId="EBI-25847109">
        <id>O14656-2</id>
        <label>TOR1A</label>
    </interactant>
    <organismsDiffer>false</organismsDiffer>
    <experiments>3</experiments>
</comment>
<comment type="interaction">
    <interactant intactId="EBI-25842075">
        <id>P21980-2</id>
    </interactant>
    <interactant intactId="EBI-12806590">
        <id>Q86WV8</id>
        <label>TSC1</label>
    </interactant>
    <organismsDiffer>false</organismsDiffer>
    <experiments>3</experiments>
</comment>
<comment type="interaction">
    <interactant intactId="EBI-25842075">
        <id>P21980-2</id>
    </interactant>
    <interactant intactId="EBI-711909">
        <id>P02766</id>
        <label>TTR</label>
    </interactant>
    <organismsDiffer>false</organismsDiffer>
    <experiments>3</experiments>
</comment>
<comment type="interaction">
    <interactant intactId="EBI-25842075">
        <id>P21980-2</id>
    </interactant>
    <interactant intactId="EBI-749211">
        <id>Q9NYH9</id>
        <label>UTP6</label>
    </interactant>
    <organismsDiffer>false</organismsDiffer>
    <experiments>3</experiments>
</comment>
<comment type="interaction">
    <interactant intactId="EBI-25842075">
        <id>P21980-2</id>
    </interactant>
    <interactant intactId="EBI-720609">
        <id>O76024</id>
        <label>WFS1</label>
    </interactant>
    <organismsDiffer>false</organismsDiffer>
    <experiments>3</experiments>
</comment>
<comment type="subcellular location">
    <subcellularLocation>
        <location evidence="19 26 38">Cytoplasm</location>
        <location evidence="19 26 38">Cytosol</location>
    </subcellularLocation>
    <subcellularLocation>
        <location evidence="26 38">Nucleus</location>
    </subcellularLocation>
    <subcellularLocation>
        <location evidence="38">Chromosome</location>
    </subcellularLocation>
    <subcellularLocation>
        <location evidence="7 10 23">Secreted</location>
        <location evidence="7 10 23">Extracellular space</location>
        <location evidence="7 10 23">Extracellular matrix</location>
    </subcellularLocation>
    <subcellularLocation>
        <location evidence="5">Cell membrane</location>
    </subcellularLocation>
    <subcellularLocation>
        <location evidence="19">Mitochondrion</location>
    </subcellularLocation>
    <text evidence="38 50">Mainly localizes to the cytosol (PubMed:9575137). Present at much lower level in the nucleus and chromatin (PubMed:9575137). Also secreted via a non-classical secretion pathway to the extracellular matrix (PubMed:27270573).</text>
</comment>
<comment type="subcellular location">
    <molecule>Isoform 2</molecule>
    <subcellularLocation>
        <location evidence="12">Cytoplasm</location>
        <location evidence="12">Perinuclear region</location>
    </subcellularLocation>
</comment>
<comment type="alternative products">
    <event type="alternative splicing"/>
    <isoform>
        <id>P21980-1</id>
        <name>1</name>
        <sequence type="displayed"/>
    </isoform>
    <isoform>
        <id>P21980-2</id>
        <name>2</name>
        <name evidence="47">TGase-S</name>
        <sequence type="described" ref="VSP_006411 VSP_006412"/>
    </isoform>
    <isoform>
        <id>P21980-3</id>
        <name>3</name>
        <name>TGH2</name>
        <sequence type="described" ref="VSP_006413 VSP_006414"/>
    </isoform>
</comment>
<comment type="induction">
    <text evidence="8">By retinoic acid.</text>
</comment>
<comment type="PTM">
    <text evidence="16 20">Disulfide bond formation inactivates the calcium-dependent acyltransferase activity (PubMed:20547769). Cys-370 can form disulfide bonds with both Cys-230 and Cys-371: formation of a disulfide bond between Cys-230 and Cys-370 facilitates formation of the disulfide between Cys-370 and Cys-371, which promotes inactivation of the acyltransferase activity (PubMed:20547769). May also form interchain disulfids between Cys-230 and Cys-370 (PubMed:25192068). Ca(2+) protects against disulfide bond formation and inactivation (PubMed:20547769).</text>
</comment>
<comment type="PTM">
    <text evidence="2">Auto-transglutaminated: Forms covalent cross-links mediated by transglutaminase between Gln-633 and the epsilon-amino group of a lysine residue of itself or HMGB1, forming homopolymers and heteropolymers, respectively.</text>
</comment>
<comment type="PTM">
    <text evidence="3">S-nitrosylated, leading to inactivation of the acyltransferase activity.</text>
</comment>
<comment type="disease">
    <text evidence="36 39">TGM2 constitutes the major autoantigen in celiac disease, a multifactorial chronic disorder of the small intestine caused by intolerance to gluten (PubMed:9212111, PubMed:9623982). Celiac disease is characterized by immune-mediated enteropathy associated with failed intestinal absorption and malnutrition: intestinal inflammation is precipitated by ingestion of the protein gliadin, a component of wheat gluten in the diet (PubMed:9212111, PubMed:9623982). TGM2 is the main target for celiac disease-associated anti-endomysium autoantibodies (PubMed:9212111). It mediates its effect by catalyzing specific deamidation of gliadin; this deamidation creates an epitope that binds efficiently to HLA-DQ2 and is recognized by gut-derived T-cells (PubMed:9623982).</text>
</comment>
<comment type="similarity">
    <text evidence="60">Belongs to the transglutaminase superfamily. Transglutaminase family.</text>
</comment>
<comment type="caution">
    <text evidence="9 18">Initial enzymatic assays were performed with a protein sequence containing a Gly residue instead of a Val at position 224: such protein displays lower Ca(2+)-binding affinity and reduced transglutaminase activity.</text>
</comment>
<comment type="online information" name="Wikipedia">
    <link uri="https://en.wikipedia.org/wiki/Tissue_transglutaminase"/>
    <text>Tissue transglutaminase entry</text>
</comment>
<comment type="online information" name="Protein Spotlight">
    <link uri="https://www.proteinspotlight.org/back_issues/236/"/>
    <text>Versatile - Issue 236 of May 2021</text>
</comment>
<keyword id="KW-0002">3D-structure</keyword>
<keyword id="KW-0007">Acetylation</keyword>
<keyword id="KW-0012">Acyltransferase</keyword>
<keyword id="KW-0025">Alternative splicing</keyword>
<keyword id="KW-0106">Calcium</keyword>
<keyword id="KW-1003">Cell membrane</keyword>
<keyword id="KW-0158">Chromosome</keyword>
<keyword id="KW-0963">Cytoplasm</keyword>
<keyword id="KW-0903">Direct protein sequencing</keyword>
<keyword id="KW-1015">Disulfide bond</keyword>
<keyword id="KW-0272">Extracellular matrix</keyword>
<keyword id="KW-0342">GTP-binding</keyword>
<keyword id="KW-0378">Hydrolase</keyword>
<keyword id="KW-1017">Isopeptide bond</keyword>
<keyword id="KW-0472">Membrane</keyword>
<keyword id="KW-0479">Metal-binding</keyword>
<keyword id="KW-0496">Mitochondrion</keyword>
<keyword id="KW-0547">Nucleotide-binding</keyword>
<keyword id="KW-0539">Nucleus</keyword>
<keyword id="KW-0597">Phosphoprotein</keyword>
<keyword id="KW-0645">Protease</keyword>
<keyword id="KW-1267">Proteomics identification</keyword>
<keyword id="KW-1185">Reference proteome</keyword>
<keyword id="KW-0702">S-nitrosylation</keyword>
<keyword id="KW-0964">Secreted</keyword>
<keyword id="KW-0808">Transferase</keyword>
<name>TGM2_HUMAN</name>
<gene>
    <name evidence="48 67" type="primary">TGM2</name>
</gene>
<reference key="1">
    <citation type="journal article" date="1991" name="J. Biol. Chem.">
        <title>Isolation and characterization of cDNA clones to mouse macrophage and human endothelial cell tissue transglutaminases.</title>
        <authorList>
            <person name="Gentile V."/>
            <person name="Saydak M."/>
            <person name="Chiocca E.A."/>
            <person name="Akande O."/>
            <person name="Birckbichler P.J."/>
            <person name="Lee K.N."/>
            <person name="Stein J.P."/>
            <person name="Davies P.J.A."/>
        </authorList>
    </citation>
    <scope>NUCLEOTIDE SEQUENCE [MRNA] (ISOFORM 1)</scope>
    <scope>PARTIAL PROTEIN SEQUENCE</scope>
    <source>
        <tissue>Endothelial cell</tissue>
    </source>
</reference>
<reference key="2">
    <citation type="journal article" date="1992" name="J. Biol. Chem.">
        <title>A retinoic acid-inducible mRNA from human erythroleukemia cells encodes a novel tissue transglutaminase homologue.</title>
        <authorList>
            <person name="Fraij B.M."/>
            <person name="Birckbichler P.J."/>
            <person name="Patterson M.K. Jr."/>
            <person name="Lee K.N."/>
            <person name="Gonzales R.A."/>
        </authorList>
    </citation>
    <scope>NUCLEOTIDE SEQUENCE [MRNA] (ISOFORM 2)</scope>
    <scope>INDUCTION</scope>
</reference>
<reference key="3">
    <citation type="journal article" date="1996" name="Biochim. Biophys. Acta">
        <title>A third human tissue transglutaminase homologue as a result of alternative gene transcripts.</title>
        <authorList>
            <person name="Fraij B.M."/>
            <person name="Gonzales R.A."/>
        </authorList>
    </citation>
    <scope>NUCLEOTIDE SEQUENCE [MRNA] (ISOFORM 3)</scope>
</reference>
<reference key="4">
    <citation type="submission" date="2004-07" db="EMBL/GenBank/DDBJ databases">
        <authorList>
            <person name="Bayardo M.P."/>
            <person name="de Urraza P."/>
            <person name="Chirdo F.G."/>
        </authorList>
    </citation>
    <scope>NUCLEOTIDE SEQUENCE [MRNA] (ISOFORM 1)</scope>
    <source>
        <tissue>Colon adenocarcinoma</tissue>
    </source>
</reference>
<reference key="5">
    <citation type="journal article" date="2004" name="Nat. Genet.">
        <title>Complete sequencing and characterization of 21,243 full-length human cDNAs.</title>
        <authorList>
            <person name="Ota T."/>
            <person name="Suzuki Y."/>
            <person name="Nishikawa T."/>
            <person name="Otsuki T."/>
            <person name="Sugiyama T."/>
            <person name="Irie R."/>
            <person name="Wakamatsu A."/>
            <person name="Hayashi K."/>
            <person name="Sato H."/>
            <person name="Nagai K."/>
            <person name="Kimura K."/>
            <person name="Makita H."/>
            <person name="Sekine M."/>
            <person name="Obayashi M."/>
            <person name="Nishi T."/>
            <person name="Shibahara T."/>
            <person name="Tanaka T."/>
            <person name="Ishii S."/>
            <person name="Yamamoto J."/>
            <person name="Saito K."/>
            <person name="Kawai Y."/>
            <person name="Isono Y."/>
            <person name="Nakamura Y."/>
            <person name="Nagahari K."/>
            <person name="Murakami K."/>
            <person name="Yasuda T."/>
            <person name="Iwayanagi T."/>
            <person name="Wagatsuma M."/>
            <person name="Shiratori A."/>
            <person name="Sudo H."/>
            <person name="Hosoiri T."/>
            <person name="Kaku Y."/>
            <person name="Kodaira H."/>
            <person name="Kondo H."/>
            <person name="Sugawara M."/>
            <person name="Takahashi M."/>
            <person name="Kanda K."/>
            <person name="Yokoi T."/>
            <person name="Furuya T."/>
            <person name="Kikkawa E."/>
            <person name="Omura Y."/>
            <person name="Abe K."/>
            <person name="Kamihara K."/>
            <person name="Katsuta N."/>
            <person name="Sato K."/>
            <person name="Tanikawa M."/>
            <person name="Yamazaki M."/>
            <person name="Ninomiya K."/>
            <person name="Ishibashi T."/>
            <person name="Yamashita H."/>
            <person name="Murakawa K."/>
            <person name="Fujimori K."/>
            <person name="Tanai H."/>
            <person name="Kimata M."/>
            <person name="Watanabe M."/>
            <person name="Hiraoka S."/>
            <person name="Chiba Y."/>
            <person name="Ishida S."/>
            <person name="Ono Y."/>
            <person name="Takiguchi S."/>
            <person name="Watanabe S."/>
            <person name="Yosida M."/>
            <person name="Hotuta T."/>
            <person name="Kusano J."/>
            <person name="Kanehori K."/>
            <person name="Takahashi-Fujii A."/>
            <person name="Hara H."/>
            <person name="Tanase T.-O."/>
            <person name="Nomura Y."/>
            <person name="Togiya S."/>
            <person name="Komai F."/>
            <person name="Hara R."/>
            <person name="Takeuchi K."/>
            <person name="Arita M."/>
            <person name="Imose N."/>
            <person name="Musashino K."/>
            <person name="Yuuki H."/>
            <person name="Oshima A."/>
            <person name="Sasaki N."/>
            <person name="Aotsuka S."/>
            <person name="Yoshikawa Y."/>
            <person name="Matsunawa H."/>
            <person name="Ichihara T."/>
            <person name="Shiohata N."/>
            <person name="Sano S."/>
            <person name="Moriya S."/>
            <person name="Momiyama H."/>
            <person name="Satoh N."/>
            <person name="Takami S."/>
            <person name="Terashima Y."/>
            <person name="Suzuki O."/>
            <person name="Nakagawa S."/>
            <person name="Senoh A."/>
            <person name="Mizoguchi H."/>
            <person name="Goto Y."/>
            <person name="Shimizu F."/>
            <person name="Wakebe H."/>
            <person name="Hishigaki H."/>
            <person name="Watanabe T."/>
            <person name="Sugiyama A."/>
            <person name="Takemoto M."/>
            <person name="Kawakami B."/>
            <person name="Yamazaki M."/>
            <person name="Watanabe K."/>
            <person name="Kumagai A."/>
            <person name="Itakura S."/>
            <person name="Fukuzumi Y."/>
            <person name="Fujimori Y."/>
            <person name="Komiyama M."/>
            <person name="Tashiro H."/>
            <person name="Tanigami A."/>
            <person name="Fujiwara T."/>
            <person name="Ono T."/>
            <person name="Yamada K."/>
            <person name="Fujii Y."/>
            <person name="Ozaki K."/>
            <person name="Hirao M."/>
            <person name="Ohmori Y."/>
            <person name="Kawabata A."/>
            <person name="Hikiji T."/>
            <person name="Kobatake N."/>
            <person name="Inagaki H."/>
            <person name="Ikema Y."/>
            <person name="Okamoto S."/>
            <person name="Okitani R."/>
            <person name="Kawakami T."/>
            <person name="Noguchi S."/>
            <person name="Itoh T."/>
            <person name="Shigeta K."/>
            <person name="Senba T."/>
            <person name="Matsumura K."/>
            <person name="Nakajima Y."/>
            <person name="Mizuno T."/>
            <person name="Morinaga M."/>
            <person name="Sasaki M."/>
            <person name="Togashi T."/>
            <person name="Oyama M."/>
            <person name="Hata H."/>
            <person name="Watanabe M."/>
            <person name="Komatsu T."/>
            <person name="Mizushima-Sugano J."/>
            <person name="Satoh T."/>
            <person name="Shirai Y."/>
            <person name="Takahashi Y."/>
            <person name="Nakagawa K."/>
            <person name="Okumura K."/>
            <person name="Nagase T."/>
            <person name="Nomura N."/>
            <person name="Kikuchi H."/>
            <person name="Masuho Y."/>
            <person name="Yamashita R."/>
            <person name="Nakai K."/>
            <person name="Yada T."/>
            <person name="Nakamura Y."/>
            <person name="Ohara O."/>
            <person name="Isogai T."/>
            <person name="Sugano S."/>
        </authorList>
    </citation>
    <scope>NUCLEOTIDE SEQUENCE [LARGE SCALE MRNA] (ISOFORM 1)</scope>
    <source>
        <tissue>Placenta</tissue>
    </source>
</reference>
<reference key="6">
    <citation type="submission" date="2006-05" db="EMBL/GenBank/DDBJ databases">
        <authorList>
            <consortium name="NIEHS SNPs program"/>
        </authorList>
    </citation>
    <scope>NUCLEOTIDE SEQUENCE [GENOMIC DNA]</scope>
    <scope>VARIANTS HIS-76; HIS-214; ARG-324; TRP-436 AND SER-536</scope>
</reference>
<reference key="7">
    <citation type="journal article" date="2001" name="Nature">
        <title>The DNA sequence and comparative analysis of human chromosome 20.</title>
        <authorList>
            <person name="Deloukas P."/>
            <person name="Matthews L.H."/>
            <person name="Ashurst J.L."/>
            <person name="Burton J."/>
            <person name="Gilbert J.G.R."/>
            <person name="Jones M."/>
            <person name="Stavrides G."/>
            <person name="Almeida J.P."/>
            <person name="Babbage A.K."/>
            <person name="Bagguley C.L."/>
            <person name="Bailey J."/>
            <person name="Barlow K.F."/>
            <person name="Bates K.N."/>
            <person name="Beard L.M."/>
            <person name="Beare D.M."/>
            <person name="Beasley O.P."/>
            <person name="Bird C.P."/>
            <person name="Blakey S.E."/>
            <person name="Bridgeman A.M."/>
            <person name="Brown A.J."/>
            <person name="Buck D."/>
            <person name="Burrill W.D."/>
            <person name="Butler A.P."/>
            <person name="Carder C."/>
            <person name="Carter N.P."/>
            <person name="Chapman J.C."/>
            <person name="Clamp M."/>
            <person name="Clark G."/>
            <person name="Clark L.N."/>
            <person name="Clark S.Y."/>
            <person name="Clee C.M."/>
            <person name="Clegg S."/>
            <person name="Cobley V.E."/>
            <person name="Collier R.E."/>
            <person name="Connor R.E."/>
            <person name="Corby N.R."/>
            <person name="Coulson A."/>
            <person name="Coville G.J."/>
            <person name="Deadman R."/>
            <person name="Dhami P.D."/>
            <person name="Dunn M."/>
            <person name="Ellington A.G."/>
            <person name="Frankland J.A."/>
            <person name="Fraser A."/>
            <person name="French L."/>
            <person name="Garner P."/>
            <person name="Grafham D.V."/>
            <person name="Griffiths C."/>
            <person name="Griffiths M.N.D."/>
            <person name="Gwilliam R."/>
            <person name="Hall R.E."/>
            <person name="Hammond S."/>
            <person name="Harley J.L."/>
            <person name="Heath P.D."/>
            <person name="Ho S."/>
            <person name="Holden J.L."/>
            <person name="Howden P.J."/>
            <person name="Huckle E."/>
            <person name="Hunt A.R."/>
            <person name="Hunt S.E."/>
            <person name="Jekosch K."/>
            <person name="Johnson C.M."/>
            <person name="Johnson D."/>
            <person name="Kay M.P."/>
            <person name="Kimberley A.M."/>
            <person name="King A."/>
            <person name="Knights A."/>
            <person name="Laird G.K."/>
            <person name="Lawlor S."/>
            <person name="Lehvaeslaiho M.H."/>
            <person name="Leversha M.A."/>
            <person name="Lloyd C."/>
            <person name="Lloyd D.M."/>
            <person name="Lovell J.D."/>
            <person name="Marsh V.L."/>
            <person name="Martin S.L."/>
            <person name="McConnachie L.J."/>
            <person name="McLay K."/>
            <person name="McMurray A.A."/>
            <person name="Milne S.A."/>
            <person name="Mistry D."/>
            <person name="Moore M.J.F."/>
            <person name="Mullikin J.C."/>
            <person name="Nickerson T."/>
            <person name="Oliver K."/>
            <person name="Parker A."/>
            <person name="Patel R."/>
            <person name="Pearce T.A.V."/>
            <person name="Peck A.I."/>
            <person name="Phillimore B.J.C.T."/>
            <person name="Prathalingam S.R."/>
            <person name="Plumb R.W."/>
            <person name="Ramsay H."/>
            <person name="Rice C.M."/>
            <person name="Ross M.T."/>
            <person name="Scott C.E."/>
            <person name="Sehra H.K."/>
            <person name="Shownkeen R."/>
            <person name="Sims S."/>
            <person name="Skuce C.D."/>
            <person name="Smith M.L."/>
            <person name="Soderlund C."/>
            <person name="Steward C.A."/>
            <person name="Sulston J.E."/>
            <person name="Swann R.M."/>
            <person name="Sycamore N."/>
            <person name="Taylor R."/>
            <person name="Tee L."/>
            <person name="Thomas D.W."/>
            <person name="Thorpe A."/>
            <person name="Tracey A."/>
            <person name="Tromans A.C."/>
            <person name="Vaudin M."/>
            <person name="Wall M."/>
            <person name="Wallis J.M."/>
            <person name="Whitehead S.L."/>
            <person name="Whittaker P."/>
            <person name="Willey D.L."/>
            <person name="Williams L."/>
            <person name="Williams S.A."/>
            <person name="Wilming L."/>
            <person name="Wray P.W."/>
            <person name="Hubbard T."/>
            <person name="Durbin R.M."/>
            <person name="Bentley D.R."/>
            <person name="Beck S."/>
            <person name="Rogers J."/>
        </authorList>
    </citation>
    <scope>NUCLEOTIDE SEQUENCE [LARGE SCALE GENOMIC DNA]</scope>
</reference>
<reference key="8">
    <citation type="submission" date="2005-09" db="EMBL/GenBank/DDBJ databases">
        <authorList>
            <person name="Mural R.J."/>
            <person name="Istrail S."/>
            <person name="Sutton G.G."/>
            <person name="Florea L."/>
            <person name="Halpern A.L."/>
            <person name="Mobarry C.M."/>
            <person name="Lippert R."/>
            <person name="Walenz B."/>
            <person name="Shatkay H."/>
            <person name="Dew I."/>
            <person name="Miller J.R."/>
            <person name="Flanigan M.J."/>
            <person name="Edwards N.J."/>
            <person name="Bolanos R."/>
            <person name="Fasulo D."/>
            <person name="Halldorsson B.V."/>
            <person name="Hannenhalli S."/>
            <person name="Turner R."/>
            <person name="Yooseph S."/>
            <person name="Lu F."/>
            <person name="Nusskern D.R."/>
            <person name="Shue B.C."/>
            <person name="Zheng X.H."/>
            <person name="Zhong F."/>
            <person name="Delcher A.L."/>
            <person name="Huson D.H."/>
            <person name="Kravitz S.A."/>
            <person name="Mouchard L."/>
            <person name="Reinert K."/>
            <person name="Remington K.A."/>
            <person name="Clark A.G."/>
            <person name="Waterman M.S."/>
            <person name="Eichler E.E."/>
            <person name="Adams M.D."/>
            <person name="Hunkapiller M.W."/>
            <person name="Myers E.W."/>
            <person name="Venter J.C."/>
        </authorList>
    </citation>
    <scope>NUCLEOTIDE SEQUENCE [LARGE SCALE GENOMIC DNA]</scope>
</reference>
<reference key="9">
    <citation type="journal article" date="2004" name="Genome Res.">
        <title>The status, quality, and expansion of the NIH full-length cDNA project: the Mammalian Gene Collection (MGC).</title>
        <authorList>
            <consortium name="The MGC Project Team"/>
        </authorList>
    </citation>
    <scope>NUCLEOTIDE SEQUENCE [LARGE SCALE MRNA] (ISOFORM 2)</scope>
    <source>
        <tissue>Kidney</tissue>
    </source>
</reference>
<reference key="10">
    <citation type="submission" date="2008-12" db="UniProtKB">
        <authorList>
            <person name="Bienvenut W.V."/>
            <person name="Lilla S."/>
            <person name="von Kriegsheim A."/>
            <person name="Lempens A."/>
            <person name="Kolch W."/>
        </authorList>
    </citation>
    <scope>PROTEIN SEQUENCE OF 2-9; 365-377; 565-590; 635-649 AND 664-674</scope>
    <scope>CLEAVAGE OF INITIATOR METHIONINE</scope>
    <scope>ACETYLATION AT ALA-2</scope>
    <scope>IDENTIFICATION BY MASS SPECTROMETRY</scope>
    <source>
        <tissue>Ovarian carcinoma</tissue>
    </source>
</reference>
<reference key="11">
    <citation type="journal article" date="2001" name="Genome Res.">
        <title>Towards a catalog of human genes and proteins: sequencing and analysis of 500 novel complete protein coding human cDNAs.</title>
        <authorList>
            <person name="Wiemann S."/>
            <person name="Weil B."/>
            <person name="Wellenreuther R."/>
            <person name="Gassenhuber J."/>
            <person name="Glassl S."/>
            <person name="Ansorge W."/>
            <person name="Boecher M."/>
            <person name="Bloecker H."/>
            <person name="Bauersachs S."/>
            <person name="Blum H."/>
            <person name="Lauber J."/>
            <person name="Duesterhoeft A."/>
            <person name="Beyer A."/>
            <person name="Koehrer K."/>
            <person name="Strack N."/>
            <person name="Mewes H.-W."/>
            <person name="Ottenwaelder B."/>
            <person name="Obermaier B."/>
            <person name="Tampe J."/>
            <person name="Heubner D."/>
            <person name="Wambutt R."/>
            <person name="Korn B."/>
            <person name="Klein M."/>
            <person name="Poustka A."/>
        </authorList>
    </citation>
    <scope>NUCLEOTIDE SEQUENCE [LARGE SCALE MRNA] OF 448-548 (ISOFORM 2)</scope>
    <source>
        <tissue>Lymph node</tissue>
    </source>
</reference>
<reference key="12">
    <citation type="journal article" date="1988" name="FEBS Lett.">
        <title>GTP modulates calcium binding and cation-induced conformational changes in erythrocyte transglutaminase.</title>
        <authorList>
            <person name="Bergamini C.M."/>
        </authorList>
    </citation>
    <scope>ACTIVITY REGULATION</scope>
</reference>
<reference key="13">
    <citation type="journal article" date="1991" name="J. Cell. Physiol.">
        <title>Localization of cellular transglutaminase on the extracellular matrix after wounding: characteristics of the matrix bound enzyme.</title>
        <authorList>
            <person name="Upchurch H.F."/>
            <person name="Conway E."/>
            <person name="Patterson M.K. Jr."/>
            <person name="Maxwell M.D."/>
        </authorList>
    </citation>
    <scope>FUNCTION</scope>
    <scope>SUBCELLULAR LOCATION</scope>
</reference>
<reference key="14">
    <citation type="journal article" date="1994" name="Mol. Cell. Biol.">
        <title>Tissue transglutaminase and apoptosis: sense and antisense transfection studies with human neuroblastoma cells.</title>
        <authorList>
            <person name="Melino G."/>
            <person name="Annicchiarico-Petruzzelli M."/>
            <person name="Piredda L."/>
            <person name="Candi E."/>
            <person name="Gentile V."/>
            <person name="Davies P.J."/>
            <person name="Piacentini M."/>
        </authorList>
    </citation>
    <scope>FUNCTION</scope>
</reference>
<reference key="15">
    <citation type="journal article" date="1995" name="FEBS Lett.">
        <title>The importance of the GTP-binding protein tissue transglutaminase in the regulation of cell cycle progression.</title>
        <authorList>
            <person name="Mian S."/>
            <person name="el Alaoui S."/>
            <person name="Lawry J."/>
            <person name="Gentile V."/>
            <person name="Davies P.J."/>
            <person name="Griffin M."/>
        </authorList>
    </citation>
    <scope>FUNCTION</scope>
    <scope>ACTIVE SITE</scope>
    <scope>MUTAGENESIS OF CYS-277</scope>
</reference>
<reference key="16">
    <citation type="journal article" date="1995" name="J. Biol. Chem.">
        <title>Interaction site of GTP binding Gh (transglutaminase II) with phospholipase C.</title>
        <authorList>
            <person name="Hwang K.C."/>
            <person name="Gray C.D."/>
            <person name="Sivasubramanian N."/>
            <person name="Im M.J."/>
        </authorList>
    </citation>
    <scope>FUNCTION</scope>
    <scope>INTERACTION WITH PHOSPHOLIPASE C</scope>
    <scope>MUTAGENESIS OF 665-VAL--LYS-672</scope>
</reference>
<reference key="17">
    <citation type="journal article" date="1996" name="J. Biol. Chem.">
        <title>Alpha1-adrenergic receptor signaling via Gh is subtype specific and independent of its transglutaminase activity.</title>
        <authorList>
            <person name="Chen S."/>
            <person name="Lin F."/>
            <person name="Iismaa S."/>
            <person name="Lee K.N."/>
            <person name="Birckbichler P.J."/>
            <person name="Graham R.M."/>
        </authorList>
    </citation>
    <scope>FUNCTION</scope>
    <scope>ACTIVE SITE</scope>
    <scope>MUTAGENESIS OF CYS-277</scope>
</reference>
<reference key="18">
    <citation type="journal article" date="1997" name="J. Biol. Chem.">
        <title>Identification of cytoplasmic actin as an abundant glutaminyl substrate for tissue transglutaminase in HL-60 and U937 cells undergoing apoptosis.</title>
        <authorList>
            <person name="Nemes Z. Jr."/>
            <person name="Adany R."/>
            <person name="Balazs M."/>
            <person name="Boross P."/>
            <person name="Fesues L."/>
        </authorList>
    </citation>
    <scope>FUNCTION</scope>
</reference>
<reference key="19">
    <citation type="journal article" date="1997" name="Nat. Med.">
        <title>Identification of tissue transglutaminase as the autoantigen of celiac disease.</title>
        <authorList>
            <person name="Dieterich W."/>
            <person name="Ehnis T."/>
            <person name="Bauer M."/>
            <person name="Donner P."/>
            <person name="Volta U."/>
            <person name="Riecken E.O."/>
            <person name="Schuppan D."/>
        </authorList>
    </citation>
    <scope>IDENTIFICATION AS AUTOANTIGEN OF CELIAC DISEASE</scope>
</reference>
<reference key="20">
    <citation type="journal article" date="1998" name="J. Biol. Chem.">
        <title>Distinct nuclear localization and activity of tissue transglutaminase.</title>
        <authorList>
            <person name="Lesort M."/>
            <person name="Attanavanich K."/>
            <person name="Zhang J."/>
            <person name="Johnson G.V."/>
        </authorList>
    </citation>
    <scope>SUBCELLULAR LOCATION</scope>
</reference>
<reference key="21">
    <citation type="journal article" date="1998" name="Nat. Med.">
        <title>Tissue transglutaminase selectively modifies gliadin peptides that are recognized by gut-derived T cells in celiac disease.</title>
        <authorList>
            <person name="Molberg O."/>
            <person name="Mcadam S.N."/>
            <person name="Koerner R."/>
            <person name="Quarsten H."/>
            <person name="Kristiansen C."/>
            <person name="Madsen L."/>
            <person name="Fugger L."/>
            <person name="Scott H."/>
            <person name="Noren O."/>
            <person name="Roepstorff P."/>
            <person name="Lundin K.E."/>
            <person name="Sjoestroem H."/>
            <person name="Sollid L.M."/>
        </authorList>
    </citation>
    <scope>IDENTIFICATION AS AUTOANTIGEN OF CELIAC DISEASE</scope>
    <scope>FUNCTION</scope>
    <scope>CATALYTIC ACTIVITY</scope>
</reference>
<reference key="22">
    <citation type="journal article" date="2001" name="J. Biol. Chem.">
        <title>Evolution of transglutaminase genes: identification of a transglutaminase gene cluster on human chromosome 15q15. Structure of the gene encoding transglutaminase X and a novel gene family member, transglutaminase Z.</title>
        <authorList>
            <person name="Grenard P."/>
            <person name="Bates M.K."/>
            <person name="Aeschlimann D."/>
        </authorList>
    </citation>
    <scope>IDENTIFICATION</scope>
</reference>
<reference key="23">
    <citation type="journal article" date="2006" name="Proc. Natl. Acad. Sci. U.S.A.">
        <title>Two isoforms of tissue transglutaminase mediate opposing cellular fates.</title>
        <authorList>
            <person name="Antonyak M.A."/>
            <person name="Jansen J.M."/>
            <person name="Miller A.M."/>
            <person name="Ly T.K."/>
            <person name="Endo M."/>
            <person name="Cerione R.A."/>
        </authorList>
    </citation>
    <scope>FUNCTION (ISOFORM 2)</scope>
    <scope>SUBCELLULAR LOCATION (ISOFORM 2)</scope>
    <scope>SUBUNIT (ISOFORM 2)</scope>
    <scope>MUTAGENESIS OF CYS-277 (ISOFORM 2)</scope>
    <scope>MUTAGENESIS OF SER-171</scope>
</reference>
<reference key="24">
    <citation type="journal article" date="2010" name="J. Biol. Chem.">
        <title>Redox regulation of transglutaminase 2 activity.</title>
        <authorList>
            <person name="Stamnaes J."/>
            <person name="Pinkas D.M."/>
            <person name="Fleckenstein B."/>
            <person name="Khosla C."/>
            <person name="Sollid L.M."/>
        </authorList>
    </citation>
    <scope>FUNCTION</scope>
    <scope>CATALYTIC ACTIVITY</scope>
    <scope>BIOPHYSICOCHEMICAL PROPERTIES</scope>
    <scope>DISULFIDE BONDS</scope>
    <scope>MUTAGENESIS OF CYS-230; CYS-370 AND CYS-371</scope>
</reference>
<reference key="25">
    <citation type="journal article" date="2003" name="Invest. Ophthalmol. Vis. Sci.">
        <title>Tissue transglutaminase as a modifying enzyme of the extracellular matrix in PVR membranes.</title>
        <authorList>
            <person name="Priglinger S.G."/>
            <person name="May C.A."/>
            <person name="Neubauer A.S."/>
            <person name="Alge C.S."/>
            <person name="Schoenfeld C.L."/>
            <person name="Kampik A."/>
            <person name="Welge-Lussen U."/>
        </authorList>
    </citation>
    <scope>FUNCTION</scope>
    <scope>SUBCELLULAR LOCATION</scope>
</reference>
<reference key="26">
    <citation type="journal article" date="2011" name="BMC Syst. Biol.">
        <title>Initial characterization of the human central proteome.</title>
        <authorList>
            <person name="Burkard T.R."/>
            <person name="Planyavsky M."/>
            <person name="Kaupe I."/>
            <person name="Breitwieser F.P."/>
            <person name="Buerckstuemmer T."/>
            <person name="Bennett K.L."/>
            <person name="Superti-Furga G."/>
            <person name="Colinge J."/>
        </authorList>
    </citation>
    <scope>IDENTIFICATION BY MASS SPECTROMETRY [LARGE SCALE ANALYSIS]</scope>
</reference>
<reference key="27">
    <citation type="journal article" date="2012" name="Proc. Natl. Acad. Sci. U.S.A.">
        <title>N-terminal acetylome analyses and functional insights of the N-terminal acetyltransferase NatB.</title>
        <authorList>
            <person name="Van Damme P."/>
            <person name="Lasa M."/>
            <person name="Polevoda B."/>
            <person name="Gazquez C."/>
            <person name="Elosegui-Artola A."/>
            <person name="Kim D.S."/>
            <person name="De Juan-Pardo E."/>
            <person name="Demeyer K."/>
            <person name="Hole K."/>
            <person name="Larrea E."/>
            <person name="Timmerman E."/>
            <person name="Prieto J."/>
            <person name="Arnesen T."/>
            <person name="Sherman F."/>
            <person name="Gevaert K."/>
            <person name="Aldabe R."/>
        </authorList>
    </citation>
    <scope>ACETYLATION [LARGE SCALE ANALYSIS] AT ALA-2</scope>
    <scope>CLEAVAGE OF INITIATOR METHIONINE [LARGE SCALE ANALYSIS]</scope>
    <scope>IDENTIFICATION BY MASS SPECTROMETRY [LARGE SCALE ANALYSIS]</scope>
</reference>
<reference key="28">
    <citation type="journal article" date="2013" name="Amino Acids">
        <title>Histaminylation of fibrinogen by tissue transglutaminase-2 (TGM-2): potential role in modulating inflammation.</title>
        <authorList>
            <person name="Lai T.S."/>
            <person name="Greenberg C.S."/>
        </authorList>
    </citation>
    <scope>FUNCTION</scope>
    <scope>CATALYTIC ACTIVITY</scope>
</reference>
<reference key="29">
    <citation type="journal article" date="2013" name="Biochem. J.">
        <title>Identification of a specific one amino acid change in recombinant human transglutaminase 2 that regulates its activity and calcium sensitivity.</title>
        <authorList>
            <person name="Kanchan K."/>
            <person name="Erguelen E."/>
            <person name="Kiraly R."/>
            <person name="Simon-Vecsei Z."/>
            <person name="Fuxreiter M."/>
            <person name="Fesues L."/>
        </authorList>
    </citation>
    <scope>FUNCTION</scope>
    <scope>CATALYTIC ACTIVITY</scope>
    <scope>MUTAGENESIS OF VAL-224</scope>
</reference>
<reference key="30">
    <citation type="journal article" date="2013" name="PLoS ONE">
        <title>Transglutaminase 2 contributes to apoptosis induction in Jurkat T cells by modulating Ca2+ homeostasis via cross-linking RAP1GDS1.</title>
        <authorList>
            <person name="Hsieh Y.F."/>
            <person name="Liu G.Y."/>
            <person name="Lee Y.J."/>
            <person name="Yang J.J."/>
            <person name="Sandor K."/>
            <person name="Sarang Z."/>
            <person name="Bononi A."/>
            <person name="Pinton P."/>
            <person name="Tretter L."/>
            <person name="Szondy Z."/>
            <person name="Tsay G.J."/>
        </authorList>
    </citation>
    <scope>FUNCTION</scope>
    <scope>CATALYTIC ACTIVITY</scope>
    <scope>SUBCELLULAR LOCATION</scope>
    <scope>MUTAGENESIS OF CYS-277</scope>
</reference>
<reference key="31">
    <citation type="journal article" date="2014" name="J. Proteomics">
        <title>An enzyme assisted RP-RPLC approach for in-depth analysis of human liver phosphoproteome.</title>
        <authorList>
            <person name="Bian Y."/>
            <person name="Song C."/>
            <person name="Cheng K."/>
            <person name="Dong M."/>
            <person name="Wang F."/>
            <person name="Huang J."/>
            <person name="Sun D."/>
            <person name="Wang L."/>
            <person name="Ye M."/>
            <person name="Zou H."/>
        </authorList>
    </citation>
    <scope>PHOSPHORYLATION [LARGE SCALE ANALYSIS] AT SER-60</scope>
    <scope>IDENTIFICATION BY MASS SPECTROMETRY [LARGE SCALE ANALYSIS]</scope>
    <source>
        <tissue>Liver</tissue>
    </source>
</reference>
<reference key="32">
    <citation type="journal article" date="2016" name="Amino Acids">
        <title>Isopeptidase activity of human transglutaminase 2: disconnection from transamidation and characterization by kinetic parameters.</title>
        <authorList>
            <person name="Kiraly R."/>
            <person name="Thangaraju K."/>
            <person name="Nagy Z."/>
            <person name="Collighan R."/>
            <person name="Nemes Z."/>
            <person name="Griffin M."/>
            <person name="Fesues L."/>
        </authorList>
    </citation>
    <scope>FUNCTION</scope>
    <scope>MUTAGENESIS OF TRP-180; TRP-241; CYS-277; TRP-278; TRP-332; PHE-334; TRP-337 AND TYR-516</scope>
</reference>
<reference key="33">
    <citation type="journal article" date="2016" name="Anal. Biochem.">
        <title>Real-time kinetic method to monitor isopeptidase activity of transglutaminase 2 on protein substrate.</title>
        <authorList>
            <person name="Thangaraju K."/>
            <person name="Biri B."/>
            <person name="Schlosser G."/>
            <person name="Kiss B."/>
            <person name="Nyitray L."/>
            <person name="Fesues L."/>
            <person name="Kiraly R."/>
        </authorList>
    </citation>
    <scope>FUNCTION</scope>
</reference>
<reference key="34">
    <citation type="journal article" date="2017" name="Amino Acids">
        <title>Role of tissue transglutaminase-2 (TG2)-mediated aminylation in biological processes.</title>
        <authorList>
            <person name="Lai T.S."/>
            <person name="Lin C.J."/>
            <person name="Greenberg C.S."/>
        </authorList>
    </citation>
    <scope>REVIEW</scope>
</reference>
<reference key="35">
    <citation type="journal article" date="2017" name="J. Med. Chem.">
        <title>Structure-activity relationships of potent, targeted covalent inhibitors that abolish both the transamidation and GTP binding activities of human tissue transglutaminase.</title>
        <authorList>
            <person name="Akbar A."/>
            <person name="McNeil N.M.R."/>
            <person name="Albert M.R."/>
            <person name="Ta V."/>
            <person name="Adhikary G."/>
            <person name="Bourgeois K."/>
            <person name="Eckert R.L."/>
            <person name="Keillor J.W."/>
        </authorList>
    </citation>
    <scope>ACTIVITY REGULATION</scope>
</reference>
<reference key="36">
    <citation type="journal article" date="2017" name="Nat. Commun.">
        <title>Secreted CLIC3 drives cancer progression through its glutathione-dependent oxidoreductase activity.</title>
        <authorList>
            <person name="Hernandez-Fernaud J.R."/>
            <person name="Ruengeler E."/>
            <person name="Casazza A."/>
            <person name="Neilson L.J."/>
            <person name="Pulleine E."/>
            <person name="Santi A."/>
            <person name="Ismail S."/>
            <person name="Lilla S."/>
            <person name="Dhayade S."/>
            <person name="MacPherson I.R."/>
            <person name="McNeish I."/>
            <person name="Ennis D."/>
            <person name="Ali H."/>
            <person name="Kugeratski F.G."/>
            <person name="Al Khamici H."/>
            <person name="van den Biggelaar M."/>
            <person name="van den Berghe P.V."/>
            <person name="Cloix C."/>
            <person name="McDonald L."/>
            <person name="Millan D."/>
            <person name="Hoyle A."/>
            <person name="Kuchnio A."/>
            <person name="Carmeliet P."/>
            <person name="Valenzuela S.M."/>
            <person name="Blyth K."/>
            <person name="Yin H."/>
            <person name="Mazzone M."/>
            <person name="Norman J.C."/>
            <person name="Zanivan S."/>
        </authorList>
    </citation>
    <scope>FUNCTION</scope>
    <scope>ACTIVITY REGULATION</scope>
    <scope>SUBCELLULAR LOCATION</scope>
</reference>
<reference key="37">
    <citation type="journal article" date="2018" name="J. Biol. Chem.">
        <title>The proinflammatory protein HMGB1 is a substrate of transglutaminase-2 and forms high-molecular weight complexes with autoantigens.</title>
        <authorList>
            <person name="Willis W.L."/>
            <person name="Wang L."/>
            <person name="Wada T.T."/>
            <person name="Gardner M."/>
            <person name="Abdouni O."/>
            <person name="Hampton J."/>
            <person name="Valiente G."/>
            <person name="Young N."/>
            <person name="Ardoin S."/>
            <person name="Agarwal S."/>
            <person name="Freitas M.A."/>
            <person name="Wu L.C."/>
            <person name="Jarjour W.N."/>
        </authorList>
    </citation>
    <scope>FUNCTION</scope>
    <scope>SUBCELLULAR LOCATION</scope>
</reference>
<reference key="38">
    <citation type="journal article" date="2019" name="Biochim. Biophys. Acta">
        <title>Transglutaminase-mediated cross-linking of WDR54 regulates EGF receptor-signaling.</title>
        <authorList>
            <person name="Maeda A."/>
            <person name="Nishino T."/>
            <person name="Matsunaga R."/>
            <person name="Yokoyama A."/>
            <person name="Suga H."/>
            <person name="Yagi T."/>
            <person name="Konishi H."/>
        </authorList>
    </citation>
    <scope>FUNCTION</scope>
    <scope>MUTAGENESIS OF CYS-277</scope>
</reference>
<reference key="39">
    <citation type="journal article" date="2019" name="Nature">
        <title>Histone serotonylation is a permissive modification that enhances TFIID binding to H3K4me3.</title>
        <authorList>
            <person name="Farrelly L.A."/>
            <person name="Thompson R.E."/>
            <person name="Zhao S."/>
            <person name="Lepack A.E."/>
            <person name="Lyu Y."/>
            <person name="Bhanu N.V."/>
            <person name="Zhang B."/>
            <person name="Loh Y.E."/>
            <person name="Ramakrishnan A."/>
            <person name="Vadodaria K.C."/>
            <person name="Heard K.J."/>
            <person name="Erikson G."/>
            <person name="Nakadai T."/>
            <person name="Bastle R.M."/>
            <person name="Lukasak B.J."/>
            <person name="Zebroski H. III"/>
            <person name="Alenina N."/>
            <person name="Bader M."/>
            <person name="Berton O."/>
            <person name="Roeder R.G."/>
            <person name="Molina H."/>
            <person name="Gage F.H."/>
            <person name="Shen L."/>
            <person name="Garcia B.A."/>
            <person name="Li H."/>
            <person name="Muir T.W."/>
            <person name="Maze I."/>
        </authorList>
    </citation>
    <scope>FUNCTION</scope>
    <scope>CATALYTIC ACTIVITY</scope>
</reference>
<reference key="40">
    <citation type="journal article" date="2020" name="Science">
        <title>Dopaminylation of histone H3 in ventral tegmental area regulates cocaine seeking.</title>
        <authorList>
            <person name="Lepack A.E."/>
            <person name="Werner C.T."/>
            <person name="Stewart A.F."/>
            <person name="Fulton S.L."/>
            <person name="Zhong P."/>
            <person name="Farrelly L.A."/>
            <person name="Smith A.C.W."/>
            <person name="Ramakrishnan A."/>
            <person name="Lyu Y."/>
            <person name="Bastle R.M."/>
            <person name="Martin J.A."/>
            <person name="Mitra S."/>
            <person name="O'Connor R.M."/>
            <person name="Wang Z.J."/>
            <person name="Molina H."/>
            <person name="Turecki G."/>
            <person name="Shen L."/>
            <person name="Yan Z."/>
            <person name="Calipari E.S."/>
            <person name="Dietz D.M."/>
            <person name="Kenny P.J."/>
            <person name="Maze I."/>
        </authorList>
    </citation>
    <scope>FUNCTION</scope>
    <scope>CATALYTIC ACTIVITY</scope>
</reference>
<reference evidence="68" key="41">
    <citation type="journal article" date="2002" name="Proc. Natl. Acad. Sci. U.S.A.">
        <title>Structural basis for the guanine nucleotide-binding activity of tissue transglutaminase and its regulation of transamidation activity.</title>
        <authorList>
            <person name="Liu S."/>
            <person name="Cerione R.A."/>
            <person name="Clardy J."/>
        </authorList>
    </citation>
    <scope>X-RAY CRYSTALLOGRAPHY (2.80 ANGSTROMS) IN COMPLEX WITH GDP</scope>
</reference>
<reference evidence="69" key="42">
    <citation type="journal article" date="2007" name="PLoS Biol.">
        <title>Transglutaminase 2 undergoes a large conformational change upon activation.</title>
        <authorList>
            <person name="Pinkas D.M."/>
            <person name="Strop P."/>
            <person name="Brunger A.T."/>
            <person name="Khosla C."/>
        </authorList>
    </citation>
    <scope>X-RAY CRYSTALLOGRAPHY (2.0 ANGSTROMS)</scope>
    <scope>FUNCTION</scope>
    <scope>ACTIVITY REGULATION</scope>
    <scope>COFACTOR</scope>
</reference>
<reference evidence="70" key="43">
    <citation type="journal article" date="2010" name="Int. J. Biol. Macromol.">
        <title>Crystal structure of human transglutaminase 2 in complex with adenosine triphosphate.</title>
        <authorList>
            <person name="Han B.G."/>
            <person name="Cho J.W."/>
            <person name="Cho Y.D."/>
            <person name="Jeong K.C."/>
            <person name="Kim S.Y."/>
            <person name="Lee B.I."/>
        </authorList>
    </citation>
    <scope>X-RAY CRYSTALLOGRAPHY (3.14 ANGSTROMS) IN COMPLEX WITH ATP</scope>
    <scope>DISULFIDE BOND</scope>
</reference>
<reference evidence="71" key="44">
    <citation type="journal article" date="2014" name="PLoS ONE">
        <title>Crystal structure of transglutaminase 2 with GTP complex and amino acid sequence evidence of evolution of GTP binding site.</title>
        <authorList>
            <person name="Jang T.H."/>
            <person name="Lee D.S."/>
            <person name="Choi K."/>
            <person name="Jeong E.M."/>
            <person name="Kim I.G."/>
            <person name="Kim Y.W."/>
            <person name="Chun J.N."/>
            <person name="Jeon J.H."/>
            <person name="Park H.H."/>
        </authorList>
    </citation>
    <scope>X-RAY CRYSTALLOGRAPHY (2.80 ANGSTROMS) IN COMPLEX WITH GTP</scope>
    <scope>SUBUNIT</scope>
    <scope>DISULFIDE BOND</scope>
</reference>
<reference evidence="72" key="45">
    <citation type="journal article" date="2018" name="PLoS ONE">
        <title>Structure of natural variant transglutaminase 2 reveals molecular basis of gaining stability and higher activity.</title>
        <authorList>
            <person name="Ha H.J."/>
            <person name="Kwon S."/>
            <person name="Jeong E.M."/>
            <person name="Kim C.M."/>
            <person name="Lee K.B."/>
            <person name="Kim I.G."/>
            <person name="Park H.H."/>
        </authorList>
    </citation>
    <scope>X-RAY CRYSTALLOGRAPHY (2.54 ANGSTROMS) IN COMPLEX WITH GTP</scope>
</reference>
<reference evidence="73" key="46">
    <citation type="journal article" date="2020" name="Int. J. Mol. Sci.">
        <title>Competitive binding of magnesium to calcium binding sites reciprocally regulates transamidase and GTP hydrolysis activity of transglutaminase 2.</title>
        <authorList>
            <person name="Jeong E.M."/>
            <person name="Lee K.B."/>
            <person name="Kim G.E."/>
            <person name="Kim C.M."/>
            <person name="Lee J.H."/>
            <person name="Kim H.J."/>
            <person name="Shin J.W."/>
            <person name="Kwon M.A."/>
            <person name="Park H.H."/>
            <person name="Kim I.G."/>
        </authorList>
    </citation>
    <scope>X-RAY CRYSTALLOGRAPHY (3.35 ANGSTROMS) IN COMPLEX WITH CALCIUM AND GDP</scope>
    <scope>FUNCTION</scope>
    <scope>CATALYTIC ACTIVITY</scope>
    <scope>ACTIVITY REGULATION</scope>
    <scope>COFACTOR</scope>
    <scope>MUTAGENESIS OF GLU-437 AND GLU-539</scope>
</reference>
<reference key="47">
    <citation type="journal article" date="2006" name="Science">
        <title>The consensus coding sequences of human breast and colorectal cancers.</title>
        <authorList>
            <person name="Sjoeblom T."/>
            <person name="Jones S."/>
            <person name="Wood L.D."/>
            <person name="Parsons D.W."/>
            <person name="Lin J."/>
            <person name="Barber T.D."/>
            <person name="Mandelker D."/>
            <person name="Leary R.J."/>
            <person name="Ptak J."/>
            <person name="Silliman N."/>
            <person name="Szabo S."/>
            <person name="Buckhaults P."/>
            <person name="Farrell C."/>
            <person name="Meeh P."/>
            <person name="Markowitz S.D."/>
            <person name="Willis J."/>
            <person name="Dawson D."/>
            <person name="Willson J.K.V."/>
            <person name="Gazdar A.F."/>
            <person name="Hartigan J."/>
            <person name="Wu L."/>
            <person name="Liu C."/>
            <person name="Parmigiani G."/>
            <person name="Park B.H."/>
            <person name="Bachman K.E."/>
            <person name="Papadopoulos N."/>
            <person name="Vogelstein B."/>
            <person name="Kinzler K.W."/>
            <person name="Velculescu V.E."/>
        </authorList>
    </citation>
    <scope>VARIANT [LARGE SCALE ANALYSIS] VAL-660</scope>
</reference>
<reference key="48">
    <citation type="journal article" date="2007" name="Hum. Mutat.">
        <title>Missense mutations in the TGM2 gene encoding transglutaminase 2 are found in patients with early-onset type 2 diabetes.</title>
        <authorList>
            <person name="Porzio O."/>
            <person name="Massa O."/>
            <person name="Cunsolo V."/>
            <person name="Colombo C."/>
            <person name="Malaponti M."/>
            <person name="Bertuzzi F."/>
            <person name="Hansen T."/>
            <person name="Johansen A."/>
            <person name="Pedersen O."/>
            <person name="Meschi F."/>
            <person name="Terrinoni A."/>
            <person name="Melino G."/>
            <person name="Federici M."/>
            <person name="Decarlo N."/>
            <person name="Menicagli M."/>
            <person name="Campani D."/>
            <person name="Marchetti P."/>
            <person name="Ferdaoussi M."/>
            <person name="Froguel P."/>
            <person name="Federici G."/>
            <person name="Vaxillaire M."/>
            <person name="Barbetti F."/>
        </authorList>
    </citation>
    <scope>VARIANTS ARG-330 AND ASN-331</scope>
</reference>
<organism>
    <name type="scientific">Homo sapiens</name>
    <name type="common">Human</name>
    <dbReference type="NCBI Taxonomy" id="9606"/>
    <lineage>
        <taxon>Eukaryota</taxon>
        <taxon>Metazoa</taxon>
        <taxon>Chordata</taxon>
        <taxon>Craniata</taxon>
        <taxon>Vertebrata</taxon>
        <taxon>Euteleostomi</taxon>
        <taxon>Mammalia</taxon>
        <taxon>Eutheria</taxon>
        <taxon>Euarchontoglires</taxon>
        <taxon>Primates</taxon>
        <taxon>Haplorrhini</taxon>
        <taxon>Catarrhini</taxon>
        <taxon>Hominidae</taxon>
        <taxon>Homo</taxon>
    </lineage>
</organism>
<proteinExistence type="evidence at protein level"/>
<evidence type="ECO:0000250" key="1">
    <source>
        <dbReference type="UniProtKB" id="P00488"/>
    </source>
</evidence>
<evidence type="ECO:0000250" key="2">
    <source>
        <dbReference type="UniProtKB" id="P08587"/>
    </source>
</evidence>
<evidence type="ECO:0000250" key="3">
    <source>
        <dbReference type="UniProtKB" id="P21981"/>
    </source>
</evidence>
<evidence type="ECO:0000250" key="4">
    <source>
        <dbReference type="UniProtKB" id="P52181"/>
    </source>
</evidence>
<evidence type="ECO:0000250" key="5">
    <source>
        <dbReference type="UniProtKB" id="Q9WVJ6"/>
    </source>
</evidence>
<evidence type="ECO:0000255" key="6">
    <source>
        <dbReference type="PROSITE-ProRule" id="PRU10024"/>
    </source>
</evidence>
<evidence type="ECO:0000269" key="7">
    <source>
    </source>
</evidence>
<evidence type="ECO:0000269" key="8">
    <source>
    </source>
</evidence>
<evidence type="ECO:0000269" key="9">
    <source>
    </source>
</evidence>
<evidence type="ECO:0000269" key="10">
    <source>
    </source>
</evidence>
<evidence type="ECO:0000269" key="11">
    <source>
    </source>
</evidence>
<evidence type="ECO:0000269" key="12">
    <source>
    </source>
</evidence>
<evidence type="ECO:0000269" key="13">
    <source>
    </source>
</evidence>
<evidence type="ECO:0000269" key="14">
    <source>
    </source>
</evidence>
<evidence type="ECO:0000269" key="15">
    <source>
    </source>
</evidence>
<evidence type="ECO:0000269" key="16">
    <source>
    </source>
</evidence>
<evidence type="ECO:0000269" key="17">
    <source>
    </source>
</evidence>
<evidence type="ECO:0000269" key="18">
    <source>
    </source>
</evidence>
<evidence type="ECO:0000269" key="19">
    <source>
    </source>
</evidence>
<evidence type="ECO:0000269" key="20">
    <source>
    </source>
</evidence>
<evidence type="ECO:0000269" key="21">
    <source>
    </source>
</evidence>
<evidence type="ECO:0000269" key="22">
    <source>
    </source>
</evidence>
<evidence type="ECO:0000269" key="23">
    <source>
    </source>
</evidence>
<evidence type="ECO:0000269" key="24">
    <source>
    </source>
</evidence>
<evidence type="ECO:0000269" key="25">
    <source>
    </source>
</evidence>
<evidence type="ECO:0000269" key="26">
    <source>
    </source>
</evidence>
<evidence type="ECO:0000269" key="27">
    <source>
    </source>
</evidence>
<evidence type="ECO:0000269" key="28">
    <source>
    </source>
</evidence>
<evidence type="ECO:0000269" key="29">
    <source>
    </source>
</evidence>
<evidence type="ECO:0000269" key="30">
    <source>
    </source>
</evidence>
<evidence type="ECO:0000269" key="31">
    <source>
    </source>
</evidence>
<evidence type="ECO:0000269" key="32">
    <source>
    </source>
</evidence>
<evidence type="ECO:0000269" key="33">
    <source>
    </source>
</evidence>
<evidence type="ECO:0000269" key="34">
    <source>
    </source>
</evidence>
<evidence type="ECO:0000269" key="35">
    <source>
    </source>
</evidence>
<evidence type="ECO:0000269" key="36">
    <source>
    </source>
</evidence>
<evidence type="ECO:0000269" key="37">
    <source>
    </source>
</evidence>
<evidence type="ECO:0000269" key="38">
    <source>
    </source>
</evidence>
<evidence type="ECO:0000269" key="39">
    <source>
    </source>
</evidence>
<evidence type="ECO:0000269" key="40">
    <source ref="10"/>
</evidence>
<evidence type="ECO:0000269" key="41">
    <source ref="6"/>
</evidence>
<evidence type="ECO:0000303" key="42">
    <source>
    </source>
</evidence>
<evidence type="ECO:0000303" key="43">
    <source>
    </source>
</evidence>
<evidence type="ECO:0000303" key="44">
    <source>
    </source>
</evidence>
<evidence type="ECO:0000303" key="45">
    <source>
    </source>
</evidence>
<evidence type="ECO:0000303" key="46">
    <source>
    </source>
</evidence>
<evidence type="ECO:0000303" key="47">
    <source>
    </source>
</evidence>
<evidence type="ECO:0000303" key="48">
    <source>
    </source>
</evidence>
<evidence type="ECO:0000303" key="49">
    <source>
    </source>
</evidence>
<evidence type="ECO:0000303" key="50">
    <source>
    </source>
</evidence>
<evidence type="ECO:0000303" key="51">
    <source>
    </source>
</evidence>
<evidence type="ECO:0000303" key="52">
    <source>
    </source>
</evidence>
<evidence type="ECO:0000303" key="53">
    <source>
    </source>
</evidence>
<evidence type="ECO:0000303" key="54">
    <source>
    </source>
</evidence>
<evidence type="ECO:0000303" key="55">
    <source>
    </source>
</evidence>
<evidence type="ECO:0000303" key="56">
    <source>
    </source>
</evidence>
<evidence type="ECO:0000303" key="57">
    <source>
    </source>
</evidence>
<evidence type="ECO:0000303" key="58">
    <source>
    </source>
</evidence>
<evidence type="ECO:0000303" key="59">
    <source>
    </source>
</evidence>
<evidence type="ECO:0000305" key="60"/>
<evidence type="ECO:0000305" key="61">
    <source>
    </source>
</evidence>
<evidence type="ECO:0000305" key="62">
    <source>
    </source>
</evidence>
<evidence type="ECO:0000305" key="63">
    <source>
    </source>
</evidence>
<evidence type="ECO:0000305" key="64">
    <source>
    </source>
</evidence>
<evidence type="ECO:0000305" key="65">
    <source>
    </source>
</evidence>
<evidence type="ECO:0000305" key="66">
    <source>
    </source>
</evidence>
<evidence type="ECO:0000312" key="67">
    <source>
        <dbReference type="HGNC" id="HGNC:11778"/>
    </source>
</evidence>
<evidence type="ECO:0007744" key="68">
    <source>
        <dbReference type="PDB" id="1KV3"/>
    </source>
</evidence>
<evidence type="ECO:0007744" key="69">
    <source>
        <dbReference type="PDB" id="2Q3Z"/>
    </source>
</evidence>
<evidence type="ECO:0007744" key="70">
    <source>
        <dbReference type="PDB" id="3LY6"/>
    </source>
</evidence>
<evidence type="ECO:0007744" key="71">
    <source>
        <dbReference type="PDB" id="4PYG"/>
    </source>
</evidence>
<evidence type="ECO:0007744" key="72">
    <source>
        <dbReference type="PDB" id="6A8P"/>
    </source>
</evidence>
<evidence type="ECO:0007744" key="73">
    <source>
        <dbReference type="PDB" id="6KZB"/>
    </source>
</evidence>
<evidence type="ECO:0007744" key="74">
    <source>
    </source>
</evidence>
<evidence type="ECO:0007744" key="75">
    <source>
    </source>
</evidence>
<evidence type="ECO:0007829" key="76">
    <source>
        <dbReference type="PDB" id="1KV3"/>
    </source>
</evidence>
<evidence type="ECO:0007829" key="77">
    <source>
        <dbReference type="PDB" id="2Q3Z"/>
    </source>
</evidence>
<evidence type="ECO:0007829" key="78">
    <source>
        <dbReference type="PDB" id="3LY6"/>
    </source>
</evidence>
<evidence type="ECO:0007829" key="79">
    <source>
        <dbReference type="PDB" id="4PYG"/>
    </source>
</evidence>
<evidence type="ECO:0007829" key="80">
    <source>
        <dbReference type="PDB" id="6A8P"/>
    </source>
</evidence>
<evidence type="ECO:0007829" key="81">
    <source>
        <dbReference type="PDB" id="8TR9"/>
    </source>
</evidence>